<comment type="function">
    <molecule>Capsid protein C</molecule>
    <text evidence="6">Plays a role in virus budding by binding to the cell membrane and gathering the viral RNA into a nucleocapsid that forms the core of a mature virus particle. During virus entry, may induce genome penetration into the host cytoplasm after hemifusion induced by the surface proteins. Can migrate to the cell nucleus where it modulates host functions.</text>
</comment>
<comment type="function">
    <molecule>Capsid protein C</molecule>
    <text evidence="35">Inhibits RNA silencing by interfering with host Dicer.</text>
</comment>
<comment type="function">
    <molecule>Peptide pr</molecule>
    <text evidence="6">Prevents premature fusion activity of envelope proteins in trans-Golgi by binding to envelope protein E at pH6.0. After virion release in extracellular space, gets dissociated from E dimers.</text>
</comment>
<comment type="function">
    <molecule>Protein prM</molecule>
    <text evidence="6">Acts as a chaperone for envelope protein E during intracellular virion assembly by masking and inactivating envelope protein E fusion peptide. prM is the only viral peptide matured by host furin in the trans-Golgi network probably to avoid catastrophic activation of the viral fusion activity in acidic Golgi compartment prior to virion release. prM-E cleavage is inefficient, and many virions are only partially matured. These uncleaved prM would play a role in immune evasion.</text>
</comment>
<comment type="function">
    <molecule>Small envelope protein M</molecule>
    <text evidence="6">May play a role in virus budding. Exerts cytotoxic effects by activating a mitochondrial apoptotic pathway through M ectodomain. May display a viroporin activity.</text>
</comment>
<comment type="function">
    <molecule>Envelope protein E</molecule>
    <text evidence="6">Binds to host cell surface receptor and mediates fusion between viral and cellular membranes. Envelope protein is synthesized in the endoplasmic reticulum in the form of heterodimer with protein prM. They play a role in virion budding in the ER, and the newly formed immature particle is covered with 60 spikes composed of heterodimer between precursor prM and envelope protein E. The virion is transported to the Golgi apparatus where the low pH causes dissociation of PrM-E heterodimers and formation of E homodimers. prM-E cleavage is inefficient, and many virions are only partially matured. These uncleaved prM would play a role in immune evasion.</text>
</comment>
<comment type="function">
    <molecule>Non-structural protein 1</molecule>
    <text evidence="10 44">Involved in immune evasion, pathogenesis and viral replication. Once cleaved off the polyprotein, is targeted to three destinations: the viral replication cycle, the plasma membrane and the extracellular compartment. Essential for viral replication. Required for formation of the replication complex and recruitment of other non-structural proteins to the ER-derived membrane structures. Excreted as a hexameric lipoparticle that plays a role against host immune response. Antagonizing the complement function. Binds to the host macrophages and dendritic cells. Inhibits signal transduction originating from Toll-like receptor 3 (TLR3).</text>
</comment>
<comment type="function">
    <molecule>Non-structural protein 2A</molecule>
    <text evidence="6">Component of the viral RNA replication complex that functions in virion assembly and antagonizes the host immune response.</text>
</comment>
<comment type="function">
    <molecule>Serine protease subunit NS2B</molecule>
    <text evidence="6 14">Required cofactor for the serine protease function of NS3. May have membrane-destabilizing activity and form viroporins (By similarity).</text>
</comment>
<comment type="function">
    <molecule>Serine protease NS3</molecule>
    <text evidence="15 25">Displays three enzymatic activities: serine protease, NTPase and RNA helicase. NS3 serine protease, in association with NS2B, performs its autocleavage and cleaves the polyprotein at dibasic sites in the cytoplasm: C-prM, NS2A-NS2B, NS2B-NS3, NS3-NS4A, NS4A-2K and NS4B-NS5. NS3 RNA helicase binds RNA and unwinds dsRNA in the 3' to 5' direction. Also plays a role in virus assembly (PubMed:18199634).</text>
</comment>
<comment type="function">
    <molecule>Non-structural protein 4A</molecule>
    <text evidence="10">Regulates the ATPase activity of the NS3 helicase activity. NS4A allows NS3 helicase to conserve energy during unwinding.</text>
</comment>
<comment type="function">
    <molecule>Peptide 2k</molecule>
    <text evidence="6">Functions as a signal peptide for NS4B and is required for the interferon antagonism activity of the latter.</text>
</comment>
<comment type="function">
    <molecule>Non-structural protein 4B</molecule>
    <text evidence="10 23">Induces the formation of ER-derived membrane vesicles where the viral replication takes place. Inhibits interferon (IFN)-induced host STAT1 phosphorylation and nuclear translocation, thereby preventing the establishment of cellular antiviral state by blocking the IFN-alpha/beta pathway (PubMed:15956546).</text>
</comment>
<comment type="function">
    <molecule>RNA-directed RNA polymerase NS5</molecule>
    <text evidence="29 33">Replicates the viral (+) and (-) RNA genome, and performs the capping of genomes in the cytoplasm (PubMed:19850911). NS5 methylates viral RNA cap at guanine N-7 and ribose 2'-O positions (PubMed:19850911). Besides its role in RNA genome replication, also prevents the establishment of cellular antiviral state by blocking the interferon-alpha/beta (IFN-alpha/beta) signaling pathway (PubMed:25211074). IFN-I induces binding of NS5 to host IFN-activated transcription factor STAT2, preventing its transcriptional activity. Host TRIM23 is the E3 ligase that interacts with and polyubiquitinates NS5 to promote its binding to STAT2 and trigger IFN-I signaling inhibition (PubMed:25211074).</text>
</comment>
<comment type="catalytic activity">
    <reaction evidence="31">
        <text>Selective hydrolysis of -Xaa-Xaa-|-Yaa- bonds in which each of the Xaa can be either Arg or Lys and Yaa can be either Ser or Ala.</text>
        <dbReference type="EC" id="3.4.21.91"/>
    </reaction>
</comment>
<comment type="catalytic activity">
    <reaction evidence="12 24">
        <text>RNA(n) + a ribonucleoside 5'-triphosphate = RNA(n+1) + diphosphate</text>
        <dbReference type="Rhea" id="RHEA:21248"/>
        <dbReference type="Rhea" id="RHEA-COMP:14527"/>
        <dbReference type="Rhea" id="RHEA-COMP:17342"/>
        <dbReference type="ChEBI" id="CHEBI:33019"/>
        <dbReference type="ChEBI" id="CHEBI:61557"/>
        <dbReference type="ChEBI" id="CHEBI:140395"/>
        <dbReference type="EC" id="2.7.7.48"/>
    </reaction>
</comment>
<comment type="catalytic activity">
    <reaction evidence="24">
        <text>a ribonucleoside 5'-triphosphate + H2O = a ribonucleoside 5'-diphosphate + phosphate + H(+)</text>
        <dbReference type="Rhea" id="RHEA:23680"/>
        <dbReference type="ChEBI" id="CHEBI:15377"/>
        <dbReference type="ChEBI" id="CHEBI:15378"/>
        <dbReference type="ChEBI" id="CHEBI:43474"/>
        <dbReference type="ChEBI" id="CHEBI:57930"/>
        <dbReference type="ChEBI" id="CHEBI:61557"/>
        <dbReference type="EC" id="3.6.1.15"/>
    </reaction>
</comment>
<comment type="catalytic activity">
    <reaction>
        <text>ATP + H2O = ADP + phosphate + H(+)</text>
        <dbReference type="Rhea" id="RHEA:13065"/>
        <dbReference type="ChEBI" id="CHEBI:15377"/>
        <dbReference type="ChEBI" id="CHEBI:15378"/>
        <dbReference type="ChEBI" id="CHEBI:30616"/>
        <dbReference type="ChEBI" id="CHEBI:43474"/>
        <dbReference type="ChEBI" id="CHEBI:456216"/>
        <dbReference type="EC" id="3.6.4.13"/>
    </reaction>
</comment>
<comment type="catalytic activity">
    <reaction evidence="16">
        <text>a 5'-end (5'-triphosphoguanosine)-ribonucleoside in mRNA + S-adenosyl-L-methionine = a 5'-end (N(7)-methyl 5'-triphosphoguanosine)-ribonucleoside in mRNA + S-adenosyl-L-homocysteine</text>
        <dbReference type="Rhea" id="RHEA:67008"/>
        <dbReference type="Rhea" id="RHEA-COMP:17166"/>
        <dbReference type="Rhea" id="RHEA-COMP:17167"/>
        <dbReference type="ChEBI" id="CHEBI:57856"/>
        <dbReference type="ChEBI" id="CHEBI:59789"/>
        <dbReference type="ChEBI" id="CHEBI:156461"/>
        <dbReference type="ChEBI" id="CHEBI:167617"/>
        <dbReference type="EC" id="2.1.1.56"/>
    </reaction>
</comment>
<comment type="catalytic activity">
    <reaction evidence="16">
        <text>a 5'-end (N(7)-methyl 5'-triphosphoguanosine)-ribonucleoside in mRNA + S-adenosyl-L-methionine = a 5'-end (N(7)-methyl 5'-triphosphoguanosine)-(2'-O-methyl-ribonucleoside) in mRNA + S-adenosyl-L-homocysteine + H(+)</text>
        <dbReference type="Rhea" id="RHEA:67020"/>
        <dbReference type="Rhea" id="RHEA-COMP:17167"/>
        <dbReference type="Rhea" id="RHEA-COMP:17168"/>
        <dbReference type="ChEBI" id="CHEBI:15378"/>
        <dbReference type="ChEBI" id="CHEBI:57856"/>
        <dbReference type="ChEBI" id="CHEBI:59789"/>
        <dbReference type="ChEBI" id="CHEBI:156461"/>
        <dbReference type="ChEBI" id="CHEBI:167609"/>
        <dbReference type="EC" id="2.1.1.57"/>
    </reaction>
</comment>
<comment type="biophysicochemical properties">
    <phDependence>
        <text evidence="31">Optimum pH is 9.</text>
    </phDependence>
</comment>
<comment type="subunit">
    <molecule>Capsid protein C</molecule>
    <text evidence="6 21">Homodimer (PubMed:12768036). Interacts (via N-terminus) with host EXOC1 (via C-terminus); this interaction results in EXOC1 degradation through the proteasome degradation pathway (By similarity).</text>
</comment>
<comment type="subunit">
    <molecule>Protein prM</molecule>
    <text evidence="6">Forms heterodimers with envelope protein E in the endoplasmic reticulum and Golgi (By similarity).</text>
</comment>
<comment type="subunit">
    <molecule>Envelope protein E</molecule>
    <text evidence="6">Homodimer; in the endoplasmic reticulum and Golgi (By similarity). Interacts with protein prM (By similarity). Interacts with non-structural protein 1 (By similarity).</text>
</comment>
<comment type="subunit">
    <molecule>Non-structural protein 1</molecule>
    <text evidence="6">Homodimer; Homohexamer when secreted (By similarity). Interacts with envelope protein E (By similarity).</text>
</comment>
<comment type="subunit">
    <molecule>Non-structural protein 2A</molecule>
    <text evidence="34">Interacts (via N-terminus) with serine protease NS3 (PubMed:25694595).</text>
</comment>
<comment type="subunit">
    <molecule>Serine protease subunit NS2B</molecule>
    <text evidence="6">Forms a heterodimer with serine protease NS3 (By similarity). May form homooligomers (By similarity).</text>
</comment>
<comment type="subunit">
    <molecule>Serine protease NS3</molecule>
    <text evidence="6 30 34">Forms a heterodimer with NS2B (By similarity). Interacts with non-structural protein 2A (via N-terminus) (PubMed:25694595). Interacts with NS4B (By similarity). Interacts with unphosphorylated RNA-directed RNA polymerase NS5; this interaction stimulates RNA-directed RNA polymerase NS5 guanylyltransferase activity (By similarity). NS3 interacts with host PDCD6IP; this interaction contributes to virion release (PubMed:21044891).</text>
</comment>
<comment type="subunit">
    <molecule>Non-structural protein 4B</molecule>
    <text evidence="6">Interacts with serine protease NS3 (By similarity).</text>
</comment>
<comment type="subunit">
    <molecule>RNA-directed RNA polymerase NS5</molecule>
    <text evidence="6 33">Homodimer (By similarity). Interacts with host STAT2; this interaction prevents the establishment of cellular antiviral state (PubMed:25211074). Interacts with serine protease NS3 (By similarity). Interacts with host TRIM23; this interaction leads to NS5 ubiquitination (PubMed:25211074).</text>
</comment>
<comment type="subcellular location">
    <molecule>Capsid protein C</molecule>
    <subcellularLocation>
        <location evidence="6">Virion</location>
    </subcellularLocation>
    <subcellularLocation>
        <location evidence="6">Host nucleus</location>
    </subcellularLocation>
    <subcellularLocation>
        <location evidence="6">Host cytoplasm</location>
        <location evidence="6">Host perinuclear region</location>
    </subcellularLocation>
    <subcellularLocation>
        <location evidence="6">Host cytoplasm</location>
    </subcellularLocation>
</comment>
<comment type="subcellular location">
    <molecule>Peptide pr</molecule>
    <subcellularLocation>
        <location evidence="6">Secreted</location>
    </subcellularLocation>
</comment>
<comment type="subcellular location">
    <molecule>Small envelope protein M</molecule>
    <subcellularLocation>
        <location evidence="22">Virion membrane</location>
        <topology evidence="22">Multi-pass membrane protein</topology>
    </subcellularLocation>
    <subcellularLocation>
        <location evidence="22">Host endoplasmic reticulum membrane</location>
        <topology evidence="11">Multi-pass membrane protein</topology>
    </subcellularLocation>
    <text evidence="22">ER membrane retention is mediated by the transmembrane domains.</text>
</comment>
<comment type="subcellular location">
    <molecule>Envelope protein E</molecule>
    <subcellularLocation>
        <location evidence="47">Virion membrane</location>
        <topology evidence="22">Multi-pass membrane protein</topology>
    </subcellularLocation>
    <subcellularLocation>
        <location evidence="37">Host endoplasmic reticulum membrane</location>
        <topology evidence="11">Multi-pass membrane protein</topology>
    </subcellularLocation>
    <text evidence="22">ER membrane retention is mediated by the transmembrane domains.</text>
</comment>
<comment type="subcellular location">
    <molecule>Non-structural protein 1</molecule>
    <subcellularLocation>
        <location evidence="6">Secreted</location>
    </subcellularLocation>
    <subcellularLocation>
        <location>Host endoplasmic reticulum membrane</location>
        <topology>Peripheral membrane protein</topology>
        <orientation evidence="6">Lumenal side</orientation>
    </subcellularLocation>
    <text evidence="10">Located in RE-derived vesicles hosting the replication complex.</text>
</comment>
<comment type="subcellular location">
    <molecule>Non-structural protein 2A</molecule>
    <subcellularLocation>
        <location evidence="6">Host endoplasmic reticulum membrane</location>
        <topology evidence="6">Multi-pass membrane protein</topology>
    </subcellularLocation>
</comment>
<comment type="subcellular location">
    <molecule>Serine protease subunit NS2B</molecule>
    <subcellularLocation>
        <location>Host endoplasmic reticulum membrane</location>
        <topology evidence="6">Multi-pass membrane protein</topology>
    </subcellularLocation>
</comment>
<comment type="subcellular location">
    <molecule>Serine protease NS3</molecule>
    <subcellularLocation>
        <location evidence="15">Host endoplasmic reticulum membrane</location>
        <topology evidence="15">Peripheral membrane protein</topology>
        <orientation evidence="15">Cytoplasmic side</orientation>
    </subcellularLocation>
    <text evidence="15">Remains non-covalently associated to serine protease subunit NS2B.</text>
</comment>
<comment type="subcellular location">
    <molecule>Non-structural protein 4A</molecule>
    <subcellularLocation>
        <location evidence="6">Host endoplasmic reticulum membrane</location>
        <topology evidence="6">Multi-pass membrane protein</topology>
    </subcellularLocation>
    <text evidence="6">Located in RE-associated vesicles hosting the replication complex.</text>
</comment>
<comment type="subcellular location">
    <molecule>Non-structural protein 4B</molecule>
    <subcellularLocation>
        <location evidence="6">Host endoplasmic reticulum membrane</location>
        <topology evidence="6">Multi-pass membrane protein</topology>
    </subcellularLocation>
    <text evidence="10">Located in RE-derived vesicles hosting the replication complex.</text>
</comment>
<comment type="subcellular location">
    <molecule>RNA-directed RNA polymerase NS5</molecule>
    <subcellularLocation>
        <location>Host endoplasmic reticulum membrane</location>
        <topology>Peripheral membrane protein</topology>
        <orientation>Cytoplasmic side</orientation>
    </subcellularLocation>
    <subcellularLocation>
        <location evidence="6">Host nucleus</location>
    </subcellularLocation>
    <text evidence="6">Located in RE-associated vesicles hosting the replication complex. NS5 protein is mainly localized in the nucleus rather than in ER vesicles.</text>
</comment>
<comment type="domain">
    <text evidence="6">The transmembrane domains of the small envelope protein M and envelope protein E contain an endoplasmic reticulum retention signal.</text>
</comment>
<comment type="PTM">
    <molecule>Genome polyprotein</molecule>
    <text evidence="26 31 37 38 39 40 41">Specific enzymatic cleavages in vivo yield mature proteins. The nascent capsid protein C contains a C-terminal hydrophobic domain that act as a signal sequence for translocation of prM into the lumen of the ER. Mature capsid protein C is cleaved at a site upstream of this hydrophobic domain by NS3. prM is cleaved in post-Golgi vesicles by a host furin, releasing the mature small envelope protein M, and peptide pr. Non-structural protein 2A-alpha, a C-terminally truncated form of non-structural protein 2A, results from partial cleavage by NS3. Specific enzymatic cleavages in vivo yield mature proteins peptide 2K acts as a signal sequence and is removed from the N-terminus of NS4B by the host signal peptidase in the ER lumen. Signal cleavage at the 2K-4B site requires a prior NS3 protease-mediated cleavage at the 4A-2K site.</text>
</comment>
<comment type="PTM">
    <molecule>Protein prM</molecule>
    <text evidence="6">Cleaved in post-Golgi vesicles by a host furin, releasing the mature small envelope protein M, and peptide pr. This cleavage is incomplete as up to 30% of viral particles still carry uncleaved prM.</text>
</comment>
<comment type="PTM">
    <molecule>Envelope protein E</molecule>
    <text evidence="6">N-glycosylated.</text>
</comment>
<comment type="PTM">
    <molecule>Non-structural protein 1</molecule>
    <text evidence="6">N-glycosylated. The excreted form is glycosylated and this is required for efficient secretion of the protein from infected cells.</text>
</comment>
<comment type="PTM">
    <text evidence="33">Polyubiquitinated; ubiquitination is probably mediated by host TRIM23 and is prerequisite for NS5-STAT2 interaction. NS5 is not ISGylated or sumoylated.</text>
</comment>
<comment type="PTM">
    <molecule>Serine protease NS3</molecule>
    <text evidence="8">Acetylated by host KAT5. Acetylation modulates NS3 RNA-binding and unwinding activities and plays an important positive role for viral replication.</text>
</comment>
<comment type="PTM">
    <molecule>RNA-directed RNA polymerase NS5</molecule>
    <text evidence="45">Phosphorylated on serines residues. This phosphorylation may trigger NS5 nuclear localization.</text>
</comment>
<comment type="similarity">
    <text evidence="16">In the N-terminal section; belongs to the class I-like SAM-binding methyltransferase superfamily. mRNA cap 0-1 NS5-type methyltransferase family.</text>
</comment>
<evidence type="ECO:0000250" key="1"/>
<evidence type="ECO:0000250" key="2">
    <source>
        <dbReference type="UniProtKB" id="P06935"/>
    </source>
</evidence>
<evidence type="ECO:0000250" key="3">
    <source>
        <dbReference type="UniProtKB" id="P14335"/>
    </source>
</evidence>
<evidence type="ECO:0000250" key="4">
    <source>
        <dbReference type="UniProtKB" id="P14336"/>
    </source>
</evidence>
<evidence type="ECO:0000250" key="5">
    <source>
        <dbReference type="UniProtKB" id="P14340"/>
    </source>
</evidence>
<evidence type="ECO:0000250" key="6">
    <source>
        <dbReference type="UniProtKB" id="P17763"/>
    </source>
</evidence>
<evidence type="ECO:0000250" key="7">
    <source>
        <dbReference type="UniProtKB" id="P29990"/>
    </source>
</evidence>
<evidence type="ECO:0000250" key="8">
    <source>
        <dbReference type="UniProtKB" id="Q32ZE1"/>
    </source>
</evidence>
<evidence type="ECO:0000250" key="9">
    <source>
        <dbReference type="UniProtKB" id="Q6YMS4"/>
    </source>
</evidence>
<evidence type="ECO:0000250" key="10">
    <source>
        <dbReference type="UniProtKB" id="Q9Q6P4"/>
    </source>
</evidence>
<evidence type="ECO:0000255" key="11"/>
<evidence type="ECO:0000255" key="12">
    <source>
        <dbReference type="PROSITE-ProRule" id="PRU00539"/>
    </source>
</evidence>
<evidence type="ECO:0000255" key="13">
    <source>
        <dbReference type="PROSITE-ProRule" id="PRU00541"/>
    </source>
</evidence>
<evidence type="ECO:0000255" key="14">
    <source>
        <dbReference type="PROSITE-ProRule" id="PRU00859"/>
    </source>
</evidence>
<evidence type="ECO:0000255" key="15">
    <source>
        <dbReference type="PROSITE-ProRule" id="PRU00860"/>
    </source>
</evidence>
<evidence type="ECO:0000255" key="16">
    <source>
        <dbReference type="PROSITE-ProRule" id="PRU00924"/>
    </source>
</evidence>
<evidence type="ECO:0000269" key="17">
    <source>
    </source>
</evidence>
<evidence type="ECO:0000269" key="18">
    <source>
    </source>
</evidence>
<evidence type="ECO:0000269" key="19">
    <source>
    </source>
</evidence>
<evidence type="ECO:0000269" key="20">
    <source>
    </source>
</evidence>
<evidence type="ECO:0000269" key="21">
    <source>
    </source>
</evidence>
<evidence type="ECO:0000269" key="22">
    <source>
    </source>
</evidence>
<evidence type="ECO:0000269" key="23">
    <source>
    </source>
</evidence>
<evidence type="ECO:0000269" key="24">
    <source>
    </source>
</evidence>
<evidence type="ECO:0000269" key="25">
    <source>
    </source>
</evidence>
<evidence type="ECO:0000269" key="26">
    <source>
    </source>
</evidence>
<evidence type="ECO:0000269" key="27">
    <source>
    </source>
</evidence>
<evidence type="ECO:0000269" key="28">
    <source>
    </source>
</evidence>
<evidence type="ECO:0000269" key="29">
    <source>
    </source>
</evidence>
<evidence type="ECO:0000269" key="30">
    <source>
    </source>
</evidence>
<evidence type="ECO:0000269" key="31">
    <source>
    </source>
</evidence>
<evidence type="ECO:0000269" key="32">
    <source>
    </source>
</evidence>
<evidence type="ECO:0000269" key="33">
    <source>
    </source>
</evidence>
<evidence type="ECO:0000269" key="34">
    <source>
    </source>
</evidence>
<evidence type="ECO:0000269" key="35">
    <source>
    </source>
</evidence>
<evidence type="ECO:0000269" key="36">
    <source>
    </source>
</evidence>
<evidence type="ECO:0000269" key="37">
    <source>
    </source>
</evidence>
<evidence type="ECO:0000269" key="38">
    <source>
    </source>
</evidence>
<evidence type="ECO:0000269" key="39">
    <source>
    </source>
</evidence>
<evidence type="ECO:0000269" key="40">
    <source>
    </source>
</evidence>
<evidence type="ECO:0000269" key="41">
    <source>
    </source>
</evidence>
<evidence type="ECO:0000269" key="42">
    <source>
    </source>
</evidence>
<evidence type="ECO:0000269" key="43">
    <source>
    </source>
</evidence>
<evidence type="ECO:0000269" key="44">
    <source>
    </source>
</evidence>
<evidence type="ECO:0000269" key="45">
    <source>
    </source>
</evidence>
<evidence type="ECO:0000303" key="46">
    <source>
    </source>
</evidence>
<evidence type="ECO:0000305" key="47"/>
<evidence type="ECO:0007744" key="48">
    <source>
        <dbReference type="PDB" id="3EVA"/>
    </source>
</evidence>
<evidence type="ECO:0007744" key="49">
    <source>
        <dbReference type="PDB" id="3EVB"/>
    </source>
</evidence>
<evidence type="ECO:0007744" key="50">
    <source>
        <dbReference type="PDB" id="3EVC"/>
    </source>
</evidence>
<evidence type="ECO:0007744" key="51">
    <source>
        <dbReference type="PDB" id="3EVD"/>
    </source>
</evidence>
<evidence type="ECO:0007744" key="52">
    <source>
        <dbReference type="PDB" id="3EVE"/>
    </source>
</evidence>
<evidence type="ECO:0007744" key="53">
    <source>
        <dbReference type="PDB" id="3EVF"/>
    </source>
</evidence>
<evidence type="ECO:0007829" key="54">
    <source>
        <dbReference type="PDB" id="1YKS"/>
    </source>
</evidence>
<evidence type="ECO:0007829" key="55">
    <source>
        <dbReference type="PDB" id="3EVD"/>
    </source>
</evidence>
<evidence type="ECO:0007829" key="56">
    <source>
        <dbReference type="PDB" id="3EVF"/>
    </source>
</evidence>
<evidence type="ECO:0007829" key="57">
    <source>
        <dbReference type="PDB" id="5FFM"/>
    </source>
</evidence>
<evidence type="ECO:0007829" key="58">
    <source>
        <dbReference type="PDB" id="6EPK"/>
    </source>
</evidence>
<evidence type="ECO:0007829" key="59">
    <source>
        <dbReference type="PDB" id="6IW1"/>
    </source>
</evidence>
<evidence type="ECO:0007829" key="60">
    <source>
        <dbReference type="PDB" id="6IW2"/>
    </source>
</evidence>
<evidence type="ECO:0007829" key="61">
    <source>
        <dbReference type="PDB" id="6IW4"/>
    </source>
</evidence>
<evidence type="ECO:0007829" key="62">
    <source>
        <dbReference type="PDB" id="6QSN"/>
    </source>
</evidence>
<evidence type="ECO:0007829" key="63">
    <source>
        <dbReference type="PDB" id="8ZB9"/>
    </source>
</evidence>
<name>POLG_YEFV1</name>
<protein>
    <recommendedName>
        <fullName>Genome polyprotein</fullName>
    </recommendedName>
    <component>
        <recommendedName>
            <fullName>Capsid protein C</fullName>
        </recommendedName>
        <alternativeName>
            <fullName>Core protein</fullName>
        </alternativeName>
    </component>
    <component>
        <recommendedName>
            <fullName>Protein prM</fullName>
        </recommendedName>
    </component>
    <component>
        <recommendedName>
            <fullName>Peptide pr</fullName>
        </recommendedName>
    </component>
    <component>
        <recommendedName>
            <fullName>Small envelope protein M</fullName>
        </recommendedName>
        <alternativeName>
            <fullName>Matrix protein</fullName>
        </alternativeName>
    </component>
    <component>
        <recommendedName>
            <fullName>Envelope protein E</fullName>
        </recommendedName>
    </component>
    <component>
        <recommendedName>
            <fullName>Non-structural protein 1</fullName>
            <shortName>NS1</shortName>
        </recommendedName>
    </component>
    <component>
        <recommendedName>
            <fullName>Non-structural protein 2A</fullName>
            <shortName>NS2A</shortName>
        </recommendedName>
    </component>
    <component>
        <recommendedName>
            <fullName evidence="46">Non-structural protein 2A-alpha</fullName>
            <shortName>NS2A-alpha</shortName>
        </recommendedName>
    </component>
    <component>
        <recommendedName>
            <fullName>Serine protease subunit NS2B</fullName>
        </recommendedName>
        <alternativeName>
            <fullName>Flavivirin protease NS2B regulatory subunit</fullName>
        </alternativeName>
        <alternativeName>
            <fullName>Non-structural protein 2B</fullName>
        </alternativeName>
    </component>
    <component>
        <recommendedName>
            <fullName>Serine protease NS3</fullName>
            <ecNumber evidence="31">3.4.21.91</ecNumber>
            <ecNumber evidence="24">3.6.1.15</ecNumber>
            <ecNumber evidence="24">3.6.4.13</ecNumber>
        </recommendedName>
        <alternativeName>
            <fullName>Flavivirin protease NS3 catalytic subunit</fullName>
        </alternativeName>
        <alternativeName>
            <fullName>Non-structural protein 3</fullName>
        </alternativeName>
    </component>
    <component>
        <recommendedName>
            <fullName>Non-structural protein 4A</fullName>
            <shortName>NS4A</shortName>
        </recommendedName>
    </component>
    <component>
        <recommendedName>
            <fullName>Peptide 2k</fullName>
        </recommendedName>
    </component>
    <component>
        <recommendedName>
            <fullName>Non-structural protein 4B</fullName>
            <shortName>NS4B</shortName>
        </recommendedName>
    </component>
    <component>
        <recommendedName>
            <fullName>RNA-directed RNA polymerase NS5</fullName>
            <ecNumber evidence="16">2.1.1.56</ecNumber>
            <ecNumber evidence="16">2.1.1.57</ecNumber>
            <ecNumber evidence="12">2.7.7.48</ecNumber>
        </recommendedName>
        <alternativeName>
            <fullName>Non-structural protein 5</fullName>
        </alternativeName>
    </component>
</protein>
<accession>P03314</accession>
<accession>O42028</accession>
<accession>O91857</accession>
<accession>P19901</accession>
<accession>Q102J3</accession>
<accession>Q45RQ2</accession>
<accession>Q89275</accession>
<accession>Q89276</accession>
<accession>Q9W878</accession>
<accession>Q9YWN0</accession>
<accession>Q9YWN1</accession>
<accession>Q9YWN2</accession>
<keyword id="KW-0002">3D-structure</keyword>
<keyword id="KW-0007">Acetylation</keyword>
<keyword id="KW-1072">Activation of host autophagy by virus</keyword>
<keyword id="KW-0067">ATP-binding</keyword>
<keyword id="KW-0167">Capsid protein</keyword>
<keyword id="KW-1165">Clathrin-mediated endocytosis of virus by host</keyword>
<keyword id="KW-0165">Cleavage on pair of basic residues</keyword>
<keyword id="KW-0903">Direct protein sequencing</keyword>
<keyword id="KW-1015">Disulfide bond</keyword>
<keyword id="KW-1170">Fusion of virus membrane with host endosomal membrane</keyword>
<keyword id="KW-1168">Fusion of virus membrane with host membrane</keyword>
<keyword id="KW-0325">Glycoprotein</keyword>
<keyword id="KW-0342">GTP-binding</keyword>
<keyword id="KW-0347">Helicase</keyword>
<keyword id="KW-1035">Host cytoplasm</keyword>
<keyword id="KW-1038">Host endoplasmic reticulum</keyword>
<keyword id="KW-1043">Host membrane</keyword>
<keyword id="KW-1048">Host nucleus</keyword>
<keyword id="KW-0945">Host-virus interaction</keyword>
<keyword id="KW-0378">Hydrolase</keyword>
<keyword id="KW-1090">Inhibition of host innate immune response by virus</keyword>
<keyword id="KW-1114">Inhibition of host interferon signaling pathway by virus</keyword>
<keyword id="KW-1106">Inhibition of host STAT2 by virus</keyword>
<keyword id="KW-0922">Interferon antiviral system evasion</keyword>
<keyword id="KW-1017">Isopeptide bond</keyword>
<keyword id="KW-0472">Membrane</keyword>
<keyword id="KW-0479">Metal-binding</keyword>
<keyword id="KW-0489">Methyltransferase</keyword>
<keyword id="KW-0506">mRNA capping</keyword>
<keyword id="KW-0507">mRNA processing</keyword>
<keyword id="KW-0511">Multifunctional enzyme</keyword>
<keyword id="KW-0547">Nucleotide-binding</keyword>
<keyword id="KW-0548">Nucleotidyltransferase</keyword>
<keyword id="KW-0597">Phosphoprotein</keyword>
<keyword id="KW-0645">Protease</keyword>
<keyword id="KW-1185">Reference proteome</keyword>
<keyword id="KW-0694">RNA-binding</keyword>
<keyword id="KW-0696">RNA-directed RNA polymerase</keyword>
<keyword id="KW-0949">S-adenosyl-L-methionine</keyword>
<keyword id="KW-0964">Secreted</keyword>
<keyword id="KW-0720">Serine protease</keyword>
<keyword id="KW-0941">Suppressor of RNA silencing</keyword>
<keyword id="KW-0804">Transcription</keyword>
<keyword id="KW-0805">Transcription regulation</keyword>
<keyword id="KW-0808">Transferase</keyword>
<keyword id="KW-0812">Transmembrane</keyword>
<keyword id="KW-1133">Transmembrane helix</keyword>
<keyword id="KW-0832">Ubl conjugation</keyword>
<keyword id="KW-1161">Viral attachment to host cell</keyword>
<keyword id="KW-0261">Viral envelope protein</keyword>
<keyword id="KW-0899">Viral immunoevasion</keyword>
<keyword id="KW-1162">Viral penetration into host cytoplasm</keyword>
<keyword id="KW-0693">Viral RNA replication</keyword>
<keyword id="KW-0946">Virion</keyword>
<keyword id="KW-1164">Virus endocytosis by host</keyword>
<keyword id="KW-1160">Virus entry into host cell</keyword>
<keyword id="KW-0862">Zinc</keyword>
<reference key="1">
    <citation type="journal article" date="1985" name="Science">
        <title>Nucleotide sequence of yellow fever virus: implications for flavivirus gene expression and evolution.</title>
        <authorList>
            <person name="Rice C.M."/>
            <person name="Lenches E.M."/>
            <person name="Eddy S.R."/>
            <person name="Shin S.J."/>
            <person name="Sheets R.L."/>
            <person name="Strauss J.H."/>
        </authorList>
    </citation>
    <scope>NUCLEOTIDE SEQUENCE [GENOMIC RNA]</scope>
</reference>
<reference key="2">
    <citation type="journal article" date="1995" name="Virus Res.">
        <title>Complete nucleotide sequence of yellow fever virus vaccine strains 17DD and 17D-213.</title>
        <authorList>
            <person name="dos Santos C.N."/>
            <person name="Post P.R."/>
            <person name="Carvalho R."/>
            <person name="Ferreira I.I."/>
            <person name="Rice C.M."/>
            <person name="Galler R."/>
        </authorList>
    </citation>
    <scope>NUCLEOTIDE SEQUENCE [GENOMIC RNA]</scope>
    <source>
        <strain>Isolate 17D-213 vaccine</strain>
        <strain>Isolate 17DD vaccine</strain>
    </source>
</reference>
<reference key="3">
    <citation type="journal article" date="1998" name="Virus Res.">
        <title>Yellow fever 17D vaccine virus isolated from healthy vaccinees accumulates very few mutations.</title>
        <authorList>
            <person name="Xie H."/>
            <person name="Cass A.R."/>
            <person name="Barrett A.D.T."/>
        </authorList>
    </citation>
    <scope>NUCLEOTIDE SEQUENCE [GENOMIC RNA]</scope>
    <source>
        <strain>Isolate 17D-204-USA HONG1 vaccine</strain>
        <strain>Isolate 17D-204-USA HONG2 vaccine</strain>
        <strain>Isolate 17D-204-USA HONG3 vaccine</strain>
    </source>
</reference>
<reference key="4">
    <citation type="journal article" date="1989" name="Nucleic Acids Res.">
        <title>Nucleotide sequence comparison of the genome of two 17D-204 yellow fever vaccines.</title>
        <authorList>
            <person name="Dupuy A."/>
            <person name="Despres P."/>
            <person name="Cahour A."/>
            <person name="Girard M."/>
            <person name="Bouloy M."/>
        </authorList>
    </citation>
    <scope>NUCLEOTIDE SEQUENCE [GENOMIC RNA]</scope>
    <source>
        <strain>Isolate Pasteur 17D-204 vaccine</strain>
    </source>
</reference>
<reference key="5">
    <citation type="journal article" date="1998" name="J. Gen. Virol.">
        <title>Mutation in NS5 protein attenuates mouse neurovirulence of yellow fever 17D vaccine virus.</title>
        <authorList>
            <person name="Xie H."/>
            <person name="Ryman K.D."/>
            <person name="Campbell G.A."/>
            <person name="Barrett A.D.T."/>
        </authorList>
    </citation>
    <scope>NUCLEOTIDE SEQUENCE [GENOMIC RNA]</scope>
    <source>
        <strain>Isolate 17D-204-South Africa vaccine</strain>
        <strain>Isolate 17D-204-South Africa vaccine large plaque variant</strain>
        <strain>Isolate 17D-204-South Africa vaccine medium plaque variant</strain>
    </source>
</reference>
<reference key="6">
    <citation type="journal article" date="2006" name="J. Clin. Virol.">
        <title>Yellow fever vaccine-associated viscerotropic disease and death in Spain.</title>
        <authorList>
            <person name="Doblas A."/>
            <person name="Domingo C."/>
            <person name="Bae H.G."/>
            <person name="Bohorquez C.L."/>
            <person name="de Ory F."/>
            <person name="Niedrig M."/>
            <person name="Mora D."/>
            <person name="Carrasco F.J."/>
            <person name="Tenorio A."/>
        </authorList>
    </citation>
    <scope>NUCLEOTIDE SEQUENCE [GENOMIC RNA]</scope>
    <source>
        <strain>Isolate Spain/AVD2791-93F/2004 vaccine</strain>
    </source>
</reference>
<reference key="7">
    <citation type="journal article" date="2006" name="Vaccine">
        <title>Characterization of a viscerotropic yellow fever vaccine variant from a patient in Brazil.</title>
        <authorList>
            <person name="Engel A.R."/>
            <person name="Vasconcelos P.F."/>
            <person name="McArthur M.A."/>
            <person name="Barrett A.D."/>
        </authorList>
    </citation>
    <scope>NUCLEOTIDE SEQUENCE [GENOMIC RNA]</scope>
    <source>
        <strain>Isolate Brazil/YF-VAVD/1975 vaccine</strain>
    </source>
</reference>
<reference key="8">
    <citation type="journal article" date="1986" name="Virology">
        <title>Partial N-terminal amino acid sequences of three nonstructural proteins of two flaviviruses.</title>
        <authorList>
            <person name="Rice C.M."/>
            <person name="Aebersold R."/>
            <person name="Teplow D.B."/>
            <person name="Pata J."/>
            <person name="Bell J.R."/>
            <person name="Vorndam A.V."/>
            <person name="Trent D.W."/>
            <person name="Brandriss M.W."/>
            <person name="Schlesinger J.J."/>
            <person name="Strauss J.H."/>
        </authorList>
    </citation>
    <scope>PROTEIN SEQUENCE OF 779-798; 1485-1497 AND 2507-2510</scope>
    <scope>PROTEOLYTIC CLEAVAGE (GENOME POLYPROTEIN)</scope>
</reference>
<reference key="9">
    <citation type="journal article" date="1989" name="Virology">
        <title>Yellow fever virus proteins NS2A, NS2B, and NS4B: identification and partial N-terminal amino acid sequence analysis.</title>
        <authorList>
            <person name="Chambers T.J."/>
            <person name="McCourt D.W."/>
            <person name="Rice C.M."/>
        </authorList>
    </citation>
    <scope>PROTEIN SEQUENCE OF 2257-2276</scope>
</reference>
<reference key="10">
    <citation type="journal article" date="1994" name="J. Virol.">
        <title>NS2B-3 proteinase-mediated processing in the yellow fever virus structural region: in vitro and in vivo studies.</title>
        <authorList>
            <person name="Amberg S.M."/>
            <person name="Nestorowicz A."/>
            <person name="McCourt D.W."/>
            <person name="Rice C.M."/>
        </authorList>
    </citation>
    <scope>PROTEIN SEQUENCE OF 102-121</scope>
    <scope>PROTEOLYTIC CLEAVAGE (GENOME POLYPROTEIN)</scope>
</reference>
<reference key="11">
    <citation type="journal article" date="1990" name="Proc. Natl. Acad. Sci. U.S.A.">
        <title>Evidence that the N-terminal domain of nonstructural protein NS3 from yellow fever virus is a serine protease responsible for site-specific cleavages in the viral polyprotein.</title>
        <authorList>
            <person name="Chambers T.J."/>
            <person name="Weir R.C."/>
            <person name="Grakoui A."/>
            <person name="McCourt D.W."/>
            <person name="Bazan J.F."/>
            <person name="Fletterick R.J."/>
            <person name="Rice C.M."/>
        </authorList>
    </citation>
    <scope>CHARACTERIZATION (SERINE PROTEASE NS3)</scope>
    <scope>MUTAGENESIS OF HIS-1537; ASP-1561 AND SER-1622</scope>
</reference>
<reference key="12">
    <citation type="journal article" date="1991" name="J. Virol.">
        <title>Processing of the yellow fever virus nonstructural polyprotein: a catalytically active NS3 proteinase domain and NS2B are required for cleavages at dibasic sites.</title>
        <authorList>
            <person name="Chambers T.J."/>
            <person name="Grakoui A."/>
            <person name="Rice C.M."/>
        </authorList>
    </citation>
    <scope>PROTEOLYTIC CLEAVAGE (GENOME POLYPROTEIN)</scope>
</reference>
<reference key="13">
    <citation type="journal article" date="1995" name="J. Virol.">
        <title>Mutagenesis of the yellow fever virus NS2B/3 cleavage site: determinants of cleavage site specificity and effects on polyprotein processing and viral replication.</title>
        <authorList>
            <person name="Chambers T.J."/>
            <person name="Nestorowicz A."/>
            <person name="Rice C.M."/>
        </authorList>
    </citation>
    <scope>CHARACTERIZATION (SERINE PROTEASE NS3)</scope>
</reference>
<reference key="14">
    <citation type="journal article" date="1993" name="Virology">
        <title>Mutagenesis of conserved residues at the yellow fever virus 3/4A and 4B/5 dibasic cleavage sites: effects on cleavage efficiency and polyprotein processing.</title>
        <authorList>
            <person name="Lin C."/>
            <person name="Chambers T.J."/>
            <person name="Rice C.M."/>
        </authorList>
    </citation>
    <scope>MUTAGENESIS OF ARG-2107; ARG-2505 AND ARG-2506</scope>
    <scope>PROTEOLYTIC CLEAVAGE (GENOME POLYPROTEIN)</scope>
</reference>
<reference key="15">
    <citation type="journal article" date="1993" name="J. Virol.">
        <title>Cleavage at a novel site in the NS4A region by the yellow fever virus NS2B-3 proteinase is a prerequisite for processing at the downstream 4A/4B signalase site.</title>
        <authorList>
            <person name="Lin C."/>
            <person name="Amberg S.M."/>
            <person name="Chambers T.J."/>
            <person name="Rice C.M."/>
        </authorList>
    </citation>
    <scope>MUTAGENESIS OF ARG-2107; SER-2234 AND ARG-2506</scope>
    <scope>PROTEOLYTIC CLEAVAGE (GENOME POLYPROTEIN)</scope>
</reference>
<reference key="16">
    <citation type="journal article" date="1994" name="Virology">
        <title>Mutagenesis of the yellow fever virus NS2A/2B cleavage site: effects on proteolytic processing, viral replication, and evidence for alternative processing of the NS2A protein.</title>
        <authorList>
            <person name="Nestorowicz A."/>
            <person name="Chambers T.J."/>
            <person name="Rice C.M."/>
        </authorList>
    </citation>
    <scope>MUTAGENESIS OF PHE-1351; GLY-1352; ARG-1353; ARG-1354 AND SER-1355</scope>
    <scope>PROTEOLYTIC CLEAVAGE (GENOME POLYPROTEIN)</scope>
</reference>
<reference key="17">
    <citation type="journal article" date="1996" name="Virology">
        <title>Mutagenesis of the N-linked glycosylation sites of the yellow fever virus NS1 protein: effects on virus replication and mouse neurovirulence.</title>
        <authorList>
            <person name="Muylaert I.R."/>
            <person name="Chambers T.J."/>
            <person name="Galler R."/>
            <person name="Rice C.M."/>
        </authorList>
    </citation>
    <scope>MUTAGENESIS OF ASN-908; SER-910; ASN-986 AND THR-988</scope>
</reference>
<reference key="18">
    <citation type="journal article" date="1997" name="J. Virol.">
        <title>Genetic analysis of the yellow fever virus NS1 protein: identification of a temperature-sensitive mutation which blocks RNA accumulation.</title>
        <authorList>
            <person name="Muylaert I.R."/>
            <person name="Galler R."/>
            <person name="Rice C.M."/>
        </authorList>
    </citation>
    <scope>MUTAGENESIS OF ARG-1077</scope>
</reference>
<reference key="19">
    <citation type="journal article" date="1997" name="J. Virol.">
        <title>Trans-complementation of yellow fever virus NS1 reveals a role in early RNA replication.</title>
        <authorList>
            <person name="Lindenbach B.D."/>
            <person name="Rice C.M."/>
        </authorList>
    </citation>
    <scope>FUNCTION (NON-STRUCTURAL PROTEIN 1)</scope>
</reference>
<reference key="20">
    <citation type="journal article" date="1998" name="J. Virol.">
        <title>The NS5A/NS5 proteins of viruses from three genera of the family flaviviridae are phosphorylated by associated serine/threonine kinases.</title>
        <authorList>
            <person name="Reed K.E."/>
            <person name="Gorbalenya A.E."/>
            <person name="Rice C.M."/>
        </authorList>
    </citation>
    <scope>PHOSPHORYLATION (RNA-DIRECTED RNA POLYMERASE NS5)</scope>
</reference>
<reference key="21">
    <citation type="journal article" date="1999" name="J. Virol.">
        <title>Genetic interaction of flavivirus nonstructural proteins NS1 and NS4A as a determinant of replicase function.</title>
        <authorList>
            <person name="Lindenbach B.D."/>
            <person name="Rice C.M."/>
        </authorList>
    </citation>
    <scope>INTERACTION WITH NON-STRUCTURAL PROTEIN 4A (NON-STRUCTURAL PROTEIN 1)</scope>
    <scope>INTERACTION WITH NON-STRUCTURAL PROTEIN 1 (NON-STRUCTURAL PROTEIN 4A)</scope>
</reference>
<reference key="22">
    <citation type="journal article" date="1999" name="J. Virol.">
        <title>Mutagenesis of the NS2B-NS3-mediated cleavage site in the flavivirus capsid protein demonstrates a requirement for coordinated processing.</title>
        <authorList>
            <person name="Amberg S.M."/>
            <person name="Rice C.M."/>
        </authorList>
    </citation>
    <scope>MUTAGENESIS OF 99-ARG--ARG-101</scope>
</reference>
<reference key="23">
    <citation type="journal article" date="2000" name="J. Virol.">
        <title>Mutagenesis of the signal sequence of yellow fever virus prM protein: enhancement of signalase cleavage In vitro is lethal for virus production.</title>
        <authorList>
            <person name="Lee E."/>
            <person name="Stocks C.E."/>
            <person name="Amberg S.M."/>
            <person name="Rice C.M."/>
            <person name="Lobigs M."/>
        </authorList>
    </citation>
    <scope>MUTAGENESIS OF 116-LEU--GLY-121</scope>
</reference>
<reference key="24">
    <citation type="journal article" date="2000" name="Virology">
        <title>Yellow fever virus NS2B-NS3 protease: charged-to-alanine mutagenesis and deletion analysis define regions important for protease complex formation and function.</title>
        <authorList>
            <person name="Droll D.A."/>
            <person name="Krishna Murthy H.M."/>
            <person name="Chambers T.J."/>
        </authorList>
    </citation>
    <scope>MUTAGENESIS OF 1406-GLU--LYS-1409</scope>
</reference>
<reference key="25">
    <citation type="journal article" date="2002" name="J. Virol.">
        <title>Mutations in the yellow fever virus nonstructural protein NS2A selectively block production of infectious particles.</title>
        <authorList>
            <person name="Kummerer B.M."/>
            <person name="Rice C.M."/>
        </authorList>
    </citation>
    <scope>MUTAGENESIS OF 1319-GLN--THR-1321</scope>
</reference>
<reference key="26">
    <citation type="journal article" date="2003" name="J. Virol.">
        <title>Flavivirus capsid is a dimeric alpha-helical protein.</title>
        <authorList>
            <person name="Jones C.T."/>
            <person name="Ma L."/>
            <person name="Burgner J.W."/>
            <person name="Groesch T.D."/>
            <person name="Post C.B."/>
            <person name="Kuhn R.J."/>
        </authorList>
    </citation>
    <scope>SUBUNIT (CAPSID PROTEIN C)</scope>
</reference>
<reference key="27">
    <citation type="journal article" date="2004" name="J. Virol.">
        <title>The transmembrane domains of the prM and E proteins of yellow fever virus are endoplasmic reticulum localization signals.</title>
        <authorList>
            <person name="Op De Beeck A."/>
            <person name="Rouille Y."/>
            <person name="Caron M."/>
            <person name="Duvet S."/>
            <person name="Dubuisson J."/>
        </authorList>
    </citation>
    <scope>SUBCELLULAR LOCATION (SMALL ENVELOPE PROTEIN M)</scope>
    <scope>SUBCELLULAR LOCATION (ENVELOPE PROTEIN E)</scope>
</reference>
<reference key="28">
    <citation type="journal article" date="2005" name="J. Virol.">
        <title>Inhibition of alpha/beta interferon signaling by the NS4B protein of flaviviruses.</title>
        <authorList>
            <person name="Munoz-Jordan J.L."/>
            <person name="Laurent-Rolle M."/>
            <person name="Ashour J."/>
            <person name="Martinez-Sobrido L."/>
            <person name="Ashok M."/>
            <person name="Lipkin W.I."/>
            <person name="Garcia-Sastre A."/>
        </authorList>
    </citation>
    <scope>FUNCTION (NON-STRUCTURAL PROTEIN 4B)</scope>
</reference>
<reference key="29">
    <citation type="journal article" date="2008" name="Virology">
        <title>Phosphorylation of yellow fever virus NS5 alters methyltransferase activity.</title>
        <authorList>
            <person name="Bhattacharya D."/>
            <person name="Hoover S."/>
            <person name="Falk S.P."/>
            <person name="Weisblum B."/>
            <person name="Vestling M."/>
            <person name="Striker R."/>
        </authorList>
    </citation>
    <scope>PHOSPHORYLATION AT SER-2562</scope>
    <scope>MUTAGENESIS OF SER-2562</scope>
</reference>
<reference key="30">
    <citation type="journal article" date="2008" name="J. Virol.">
        <title>Yellow Fever virus NS3 plays an essential role in virus assembly independent of its known enzymatic functions.</title>
        <authorList>
            <person name="Patkar C.G."/>
            <person name="Kuhn R.J."/>
        </authorList>
    </citation>
    <scope>FUNCTION (SERINE PROTEASE NS3)</scope>
    <scope>MUTAGENESIS OF TRP-1833</scope>
</reference>
<reference key="31">
    <citation type="journal article" date="2009" name="RNA">
        <title>The flavivirus NS5 protein is a true RNA guanylyltransferase that catalyzes a two-step reaction to form the RNA cap structure.</title>
        <authorList>
            <person name="Issur M."/>
            <person name="Geiss B.J."/>
            <person name="Bougie I."/>
            <person name="Picard-Jean F."/>
            <person name="Despins S."/>
            <person name="Mayette J."/>
            <person name="Hobdey S.E."/>
            <person name="Bisaillon M."/>
        </authorList>
    </citation>
    <scope>FUNCTION (RNA-DIRECTED RNA POLYMERASE NS5)</scope>
</reference>
<reference key="32">
    <citation type="journal article" date="2011" name="Microbes Infect.">
        <title>Interaction between the yellow fever virus nonstructural protein NS3 and the host protein Alix contributes to the release of infectious particles.</title>
        <authorList>
            <person name="Carpp L.N."/>
            <person name="Galler R."/>
            <person name="Bonaldo M.C."/>
        </authorList>
    </citation>
    <scope>INTERACTION WITH HUMAN PDCD6IP (SERINE PROTEASE NS3)</scope>
</reference>
<reference key="33">
    <citation type="journal article" date="2011" name="Biochem. Biophys. Res. Commun.">
        <title>Yellow fever virus NS2B/NS3 protease: hydrolytic properties and substrate specificity.</title>
        <authorList>
            <person name="Kondo M.Y."/>
            <person name="Oliveira L.C."/>
            <person name="Okamoto D.N."/>
            <person name="de Araujo M.R."/>
            <person name="Duarte dos Santos C.N."/>
            <person name="Juliano M.A."/>
            <person name="Juliano L."/>
            <person name="Gouvea I.E."/>
        </authorList>
    </citation>
    <scope>BIOPHYSICOCHEMICAL PROPERTIES (SERINE PROTEASE NS3)</scope>
    <scope>CATALYTIC ACTIVITY (SERINE PROTEASE NS3)</scope>
    <scope>PROTEOLYTIC CLEAVAGE (POLYPROTEIN)</scope>
</reference>
<reference key="34">
    <citation type="journal article" date="2014" name="Cell Host Microbe">
        <title>The interferon signaling antagonist function of yellow fever virus NS5 protein is activated by type I interferon.</title>
        <authorList>
            <person name="Laurent-Rolle M."/>
            <person name="Morrison J."/>
            <person name="Rajsbaum R."/>
            <person name="Macleod J.M."/>
            <person name="Pisanelli G."/>
            <person name="Pham A."/>
            <person name="Ayllon J."/>
            <person name="Miorin L."/>
            <person name="Martinez-Romero C."/>
            <person name="tenOever B.R."/>
            <person name="Garcia-Sastre A."/>
        </authorList>
    </citation>
    <scope>FUNCTION (RNA-DIRECTED RNA POLYMERASE NS5)</scope>
    <scope>UBIQUITINATION AT LYS-5 (RNA-DIRECTED RNA POLYMERASE NS5)</scope>
    <scope>INTERACTION WITH HOST STAT2 (RNA-DIRECTED RNA POLYMERASE NS5)</scope>
    <scope>MUTAGENESIS OF LYS-2512</scope>
    <scope>INTERACTION WITH HOST TRIM23 (RNA-DIRECTED RNA POLYMERASE NS5)</scope>
</reference>
<reference key="35">
    <citation type="journal article" date="2015" name="J. Virol.">
        <title>A basic cluster in the N terminus of yellow fever virus NS2A contributes to infectious particle production.</title>
        <authorList>
            <person name="Vossmann S."/>
            <person name="Wieseler J."/>
            <person name="Kerber R."/>
            <person name="Kuemmerer B.M."/>
        </authorList>
    </citation>
    <scope>INTERACTION WITH SERINE PROTEASE NS3 (NON-STRUCTURAL PROTEIN 2A)</scope>
    <scope>INTERACTION WITH NON-STRUCTURAL PROTEIN 2A (SERINE PROTEASE NS3)</scope>
    <scope>MUTAGENESIS OF 1152-ARG--ARG-1154; 1229-ARG--ARG-1231 AND GLN-1319</scope>
    <scope>TOPOLOGY (NON-STRUCTURAL PROTEIN 2A)</scope>
</reference>
<reference key="36">
    <citation type="journal article" date="2016" name="Proc. Natl. Acad. Sci. U.S.A.">
        <title>Yellow fever virus capsid protein is a potent suppressor of RNA silencing that binds double-stranded RNA.</title>
        <authorList>
            <person name="Samuel G.H."/>
            <person name="Wiley M.R."/>
            <person name="Badawi A."/>
            <person name="Adelman Z.N."/>
            <person name="Myles K.M."/>
        </authorList>
    </citation>
    <scope>FUNCTION (CAPSID PROTEIN C)</scope>
</reference>
<reference key="37">
    <citation type="journal article" date="2003" name="EMBO J.">
        <title>Structures of immature flavivirus particles.</title>
        <authorList>
            <person name="Zhang Y."/>
            <person name="Corver J."/>
            <person name="Chipman P.R."/>
            <person name="Zhang W."/>
            <person name="Pletnev S.V."/>
            <person name="Sedlak D."/>
            <person name="Baker T.S."/>
            <person name="Strauss J.H."/>
            <person name="Kuhn R.J."/>
            <person name="Rossmann M.G."/>
        </authorList>
    </citation>
    <scope>STRUCTURE BY ELECTRON MICROSCOPY (25 ANGSTROMS) OF IMMATURE PARTICLES</scope>
</reference>
<reference key="38">
    <citation type="journal article" date="2005" name="J. Virol.">
        <title>Structure of the Flavivirus helicase: implications for catalytic activity, protein interactions, and proteolytic processing.</title>
        <authorList>
            <person name="Wu J."/>
            <person name="Bera A.K."/>
            <person name="Kuhn R.J."/>
            <person name="Smith J.L."/>
        </authorList>
    </citation>
    <scope>X-RAY CRYSTALLOGRAPHY (1.8 ANGSTROMS) OF 1671-2107</scope>
    <scope>CATALYTIC ACTIVITY (SERINE PROTEASE NS3)</scope>
</reference>
<reference evidence="48 49 50 51 52 53" key="39">
    <citation type="journal article" date="2009" name="J. Mol. Biol.">
        <title>Analysis of flavivirus NS5 methyltransferase cap binding.</title>
        <authorList>
            <person name="Geiss B.J."/>
            <person name="Thompson A.A."/>
            <person name="Andrews A.J."/>
            <person name="Sons R.L."/>
            <person name="Gari H.H."/>
            <person name="Keenan S.M."/>
            <person name="Peersen O.B."/>
        </authorList>
    </citation>
    <scope>X-RAY CRYSTALLOGRAPHY (1.45 ANGSTROMS) OF 2507-2772 IN COMPLEX WITH GTP; GUANOSINE-P3-ADENOSINE-5',5'-TRIPHOSPHATE; P1-7-METHYLGUANOSINE-P3-ADENOSINE-5',5'-TRIPHOSPHATE AND S-ADENOSYL-L-HOMOCYSTEINE</scope>
</reference>
<proteinExistence type="evidence at protein level"/>
<organismHost>
    <name type="scientific">Aedes aegypti</name>
    <name type="common">Yellowfever mosquito</name>
    <name type="synonym">Culex aegypti</name>
    <dbReference type="NCBI Taxonomy" id="7159"/>
</organismHost>
<organismHost>
    <name type="scientific">Aedes luteocephalus</name>
    <name type="common">Mosquito</name>
    <dbReference type="NCBI Taxonomy" id="299629"/>
</organismHost>
<organismHost>
    <name type="scientific">Aedes simpsoni</name>
    <dbReference type="NCBI Taxonomy" id="7161"/>
</organismHost>
<organismHost>
    <name type="scientific">Homo sapiens</name>
    <name type="common">Human</name>
    <dbReference type="NCBI Taxonomy" id="9606"/>
</organismHost>
<organismHost>
    <name type="scientific">Simiiformes</name>
    <dbReference type="NCBI Taxonomy" id="314293"/>
</organismHost>
<organism>
    <name type="scientific">Yellow fever virus (strain 17D vaccine)</name>
    <name type="common">YFV</name>
    <dbReference type="NCBI Taxonomy" id="11090"/>
    <lineage>
        <taxon>Viruses</taxon>
        <taxon>Riboviria</taxon>
        <taxon>Orthornavirae</taxon>
        <taxon>Kitrinoviricota</taxon>
        <taxon>Flasuviricetes</taxon>
        <taxon>Amarillovirales</taxon>
        <taxon>Flaviviridae</taxon>
        <taxon>Orthoflavivirus</taxon>
        <taxon>Orthoflavivirus flavi</taxon>
    </lineage>
</organism>
<feature type="chain" id="PRO_0000405153" description="Genome polyprotein">
    <location>
        <begin position="1"/>
        <end position="3411"/>
    </location>
</feature>
<feature type="chain" id="PRO_0000037754" description="Capsid protein C" evidence="39">
    <location>
        <begin position="1"/>
        <end position="101"/>
    </location>
</feature>
<feature type="propeptide" id="PRO_0000261384" description="ER anchor for the capsid protein C, removed in mature form by serine protease NS3" evidence="39">
    <location>
        <begin position="102"/>
        <end position="121"/>
    </location>
</feature>
<feature type="chain" id="PRO_0000261385" description="Protein prM" evidence="7">
    <location>
        <begin position="122"/>
        <end position="285"/>
    </location>
</feature>
<feature type="chain" id="PRO_0000037755" description="Peptide pr" evidence="7">
    <location>
        <begin position="122"/>
        <end position="210"/>
    </location>
</feature>
<feature type="chain" id="PRO_0000037756" description="Small envelope protein M" evidence="7">
    <location>
        <begin position="211"/>
        <end position="285"/>
    </location>
</feature>
<feature type="chain" id="PRO_0000037757" description="Envelope protein E" evidence="7">
    <location>
        <begin position="286"/>
        <end position="778"/>
    </location>
</feature>
<feature type="chain" id="PRO_0000037758" description="Non-structural protein 1" evidence="37">
    <location>
        <begin position="779"/>
        <end position="1130"/>
    </location>
</feature>
<feature type="chain" id="PRO_0000037759" description="Non-structural protein 2A" evidence="7">
    <location>
        <begin position="1131"/>
        <end position="1354"/>
    </location>
</feature>
<feature type="chain" id="PRO_0000261386" description="Non-structural protein 2A-alpha" evidence="42">
    <location>
        <begin position="1131"/>
        <end position="1320"/>
    </location>
</feature>
<feature type="chain" id="PRO_0000037760" description="Serine protease subunit NS2B" evidence="37">
    <location>
        <begin position="1355"/>
        <end position="1484"/>
    </location>
</feature>
<feature type="chain" id="PRO_0000037761" description="Serine protease NS3" evidence="26 40">
    <location>
        <begin position="1485"/>
        <end position="2107"/>
    </location>
</feature>
<feature type="chain" id="PRO_0000037762" description="Non-structural protein 4A" evidence="41">
    <location>
        <begin position="2108"/>
        <end position="2233"/>
    </location>
</feature>
<feature type="peptide" id="PRO_0000261387" description="Peptide 2k" evidence="36">
    <location>
        <begin position="2234"/>
        <end position="2256"/>
    </location>
</feature>
<feature type="chain" id="PRO_0000037763" description="Non-structural protein 4B" evidence="40">
    <location>
        <begin position="2257"/>
        <end position="2506"/>
    </location>
</feature>
<feature type="chain" id="PRO_0000037764" description="RNA-directed RNA polymerase NS5" evidence="26 37">
    <location>
        <begin position="2507"/>
        <end position="3411"/>
    </location>
</feature>
<feature type="topological domain" description="Cytoplasmic" evidence="11">
    <location>
        <begin position="1"/>
        <end position="104"/>
    </location>
</feature>
<feature type="transmembrane region" description="Helical" evidence="11">
    <location>
        <begin position="105"/>
        <end position="125"/>
    </location>
</feature>
<feature type="topological domain" description="Extracellular" evidence="11">
    <location>
        <begin position="126"/>
        <end position="244"/>
    </location>
</feature>
<feature type="transmembrane region" description="Helical" evidence="11">
    <location>
        <begin position="245"/>
        <end position="265"/>
    </location>
</feature>
<feature type="topological domain" description="Cytoplasmic" evidence="11">
    <location>
        <begin position="266"/>
        <end position="270"/>
    </location>
</feature>
<feature type="transmembrane region" description="Helical" evidence="11">
    <location>
        <begin position="271"/>
        <end position="285"/>
    </location>
</feature>
<feature type="topological domain" description="Extracellular" evidence="11">
    <location>
        <begin position="286"/>
        <end position="730"/>
    </location>
</feature>
<feature type="transmembrane region" description="Helical" evidence="11">
    <location>
        <begin position="731"/>
        <end position="751"/>
    </location>
</feature>
<feature type="topological domain" description="Extracellular" evidence="11">
    <location>
        <begin position="752"/>
        <end position="757"/>
    </location>
</feature>
<feature type="transmembrane region" description="Helical" evidence="11">
    <location>
        <begin position="758"/>
        <end position="778"/>
    </location>
</feature>
<feature type="topological domain" description="Extracellular" evidence="11">
    <location>
        <begin position="779"/>
        <end position="1132"/>
    </location>
</feature>
<feature type="transmembrane region" description="Helical" evidence="11">
    <location>
        <begin position="1133"/>
        <end position="1153"/>
    </location>
</feature>
<feature type="topological domain" description="Cytoplasmic" evidence="11">
    <location>
        <begin position="1154"/>
        <end position="1201"/>
    </location>
</feature>
<feature type="transmembrane region" description="Helical" evidence="11">
    <location>
        <begin position="1202"/>
        <end position="1222"/>
    </location>
</feature>
<feature type="topological domain" description="Lumenal" evidence="11">
    <location>
        <begin position="1223"/>
        <end position="1287"/>
    </location>
</feature>
<feature type="transmembrane region" description="Helical" evidence="11">
    <location>
        <begin position="1288"/>
        <end position="1308"/>
    </location>
</feature>
<feature type="topological domain" description="Cytoplasmic" evidence="11">
    <location>
        <begin position="1309"/>
        <end position="1355"/>
    </location>
</feature>
<feature type="transmembrane region" description="Helical" evidence="11">
    <location>
        <begin position="1356"/>
        <end position="1376"/>
    </location>
</feature>
<feature type="topological domain" description="Lumenal" evidence="11">
    <location>
        <begin position="1377"/>
        <end position="1378"/>
    </location>
</feature>
<feature type="transmembrane region" description="Helical" evidence="11">
    <location>
        <begin position="1379"/>
        <end position="1399"/>
    </location>
</feature>
<feature type="topological domain" description="Cytoplasmic" evidence="11">
    <location>
        <begin position="1400"/>
        <end position="1456"/>
    </location>
</feature>
<feature type="intramembrane region" description="Helical" evidence="11">
    <location>
        <begin position="1457"/>
        <end position="1477"/>
    </location>
</feature>
<feature type="topological domain" description="Cytoplasmic" evidence="11">
    <location>
        <begin position="1478"/>
        <end position="2157"/>
    </location>
</feature>
<feature type="transmembrane region" description="Helical" evidence="11">
    <location>
        <begin position="2158"/>
        <end position="2178"/>
    </location>
</feature>
<feature type="topological domain" description="Lumenal" evidence="11">
    <location>
        <begin position="2179"/>
        <end position="2186"/>
    </location>
</feature>
<feature type="intramembrane region" description="Helical" evidence="11">
    <location>
        <begin position="2187"/>
        <end position="2207"/>
    </location>
</feature>
<feature type="topological domain" description="Lumenal" evidence="11">
    <location>
        <begin position="2208"/>
        <end position="2209"/>
    </location>
</feature>
<feature type="transmembrane region" description="Helical" evidence="11">
    <location>
        <begin position="2210"/>
        <end position="2230"/>
    </location>
</feature>
<feature type="topological domain" description="Cytoplasmic" evidence="11">
    <location>
        <begin position="2231"/>
        <end position="2241"/>
    </location>
</feature>
<feature type="transmembrane region" description="Helical; Note=Signal for NS4B" evidence="11">
    <location>
        <begin position="2242"/>
        <end position="2262"/>
    </location>
</feature>
<feature type="topological domain" description="Lumenal" evidence="11">
    <location>
        <begin position="2263"/>
        <end position="2293"/>
    </location>
</feature>
<feature type="intramembrane region" description="Helical" evidence="11">
    <location>
        <begin position="2294"/>
        <end position="2314"/>
    </location>
</feature>
<feature type="topological domain" description="Lumenal" evidence="11">
    <location>
        <begin position="2315"/>
        <end position="2360"/>
    </location>
</feature>
<feature type="transmembrane region" description="Helical" evidence="11">
    <location>
        <begin position="2361"/>
        <end position="2381"/>
    </location>
</feature>
<feature type="topological domain" description="Cytoplasmic" evidence="11">
    <location>
        <begin position="2382"/>
        <end position="2421"/>
    </location>
</feature>
<feature type="transmembrane region" description="Helical" evidence="11">
    <location>
        <begin position="2422"/>
        <end position="2442"/>
    </location>
</feature>
<feature type="topological domain" description="Lumenal" evidence="11">
    <location>
        <begin position="2443"/>
        <end position="2445"/>
    </location>
</feature>
<feature type="transmembrane region" description="Helical" evidence="11">
    <location>
        <begin position="2446"/>
        <end position="2466"/>
    </location>
</feature>
<feature type="topological domain" description="Cytoplasmic" evidence="11">
    <location>
        <begin position="2467"/>
        <end position="3411"/>
    </location>
</feature>
<feature type="domain" description="Peptidase S7" evidence="15">
    <location>
        <begin position="1485"/>
        <end position="1665"/>
    </location>
</feature>
<feature type="domain" description="Helicase ATP-binding" evidence="13">
    <location>
        <begin position="1669"/>
        <end position="1825"/>
    </location>
</feature>
<feature type="domain" description="Helicase C-terminal">
    <location>
        <begin position="1820"/>
        <end position="1997"/>
    </location>
</feature>
<feature type="domain" description="mRNA cap 0-1 NS5-type MT" evidence="16">
    <location>
        <begin position="2507"/>
        <end position="2771"/>
    </location>
</feature>
<feature type="domain" description="RdRp catalytic" evidence="12">
    <location>
        <begin position="3035"/>
        <end position="3187"/>
    </location>
</feature>
<feature type="region of interest" description="Hydrophobic; homodimerization of capsid protein C" evidence="7">
    <location>
        <begin position="38"/>
        <end position="72"/>
    </location>
</feature>
<feature type="region of interest" description="Fusion peptide" evidence="4">
    <location>
        <begin position="383"/>
        <end position="396"/>
    </location>
</feature>
<feature type="region of interest" description="Interacts with and activates NS3 protease" evidence="14">
    <location>
        <begin position="1407"/>
        <end position="1446"/>
    </location>
</feature>
<feature type="region of interest" description="Important for RNA-binding" evidence="5">
    <location>
        <begin position="1673"/>
        <end position="1676"/>
    </location>
</feature>
<feature type="short sequence motif" description="DEAH box" evidence="13">
    <location>
        <begin position="1773"/>
        <end position="1776"/>
    </location>
</feature>
<feature type="short sequence motif" description="Nuclear localization signal" evidence="1">
    <location>
        <begin position="2878"/>
        <end position="2911"/>
    </location>
</feature>
<feature type="active site" description="Charge relay system; for serine protease NS3 activity">
    <location>
        <position position="1537"/>
    </location>
</feature>
<feature type="active site" description="Charge relay system; for serine protease NS3 activity">
    <location>
        <position position="1561"/>
    </location>
</feature>
<feature type="active site" description="Charge relay system; for serine protease NS3 activity">
    <location>
        <position position="1622"/>
    </location>
</feature>
<feature type="active site" description="For 2'-O-MTase activity" evidence="9">
    <location>
        <position position="2567"/>
    </location>
</feature>
<feature type="active site" description="For 2'-O-MTase activity" evidence="9">
    <location>
        <position position="2652"/>
    </location>
</feature>
<feature type="active site" description="For 2'-O-MTase activity" evidence="9">
    <location>
        <position position="2688"/>
    </location>
</feature>
<feature type="active site" description="For 2'-O-MTase activity" evidence="9">
    <location>
        <position position="2724"/>
    </location>
</feature>
<feature type="binding site" evidence="13">
    <location>
        <begin position="1682"/>
        <end position="1689"/>
    </location>
    <ligand>
        <name>ATP</name>
        <dbReference type="ChEBI" id="CHEBI:30616"/>
    </ligand>
</feature>
<feature type="binding site" evidence="16">
    <location>
        <position position="2562"/>
    </location>
    <ligand>
        <name>S-adenosyl-L-methionine</name>
        <dbReference type="ChEBI" id="CHEBI:59789"/>
    </ligand>
</feature>
<feature type="binding site" evidence="16">
    <location>
        <position position="2592"/>
    </location>
    <ligand>
        <name>S-adenosyl-L-methionine</name>
        <dbReference type="ChEBI" id="CHEBI:59789"/>
    </ligand>
</feature>
<feature type="binding site" evidence="16">
    <location>
        <position position="2593"/>
    </location>
    <ligand>
        <name>S-adenosyl-L-methionine</name>
        <dbReference type="ChEBI" id="CHEBI:59789"/>
    </ligand>
</feature>
<feature type="binding site" evidence="16">
    <location>
        <position position="2610"/>
    </location>
    <ligand>
        <name>S-adenosyl-L-methionine</name>
        <dbReference type="ChEBI" id="CHEBI:59789"/>
    </ligand>
</feature>
<feature type="binding site" evidence="16">
    <location>
        <position position="2611"/>
    </location>
    <ligand>
        <name>S-adenosyl-L-methionine</name>
        <dbReference type="ChEBI" id="CHEBI:59789"/>
    </ligand>
</feature>
<feature type="binding site" evidence="16">
    <location>
        <position position="2637"/>
    </location>
    <ligand>
        <name>S-adenosyl-L-methionine</name>
        <dbReference type="ChEBI" id="CHEBI:59789"/>
    </ligand>
</feature>
<feature type="binding site" evidence="16">
    <location>
        <position position="2638"/>
    </location>
    <ligand>
        <name>S-adenosyl-L-methionine</name>
        <dbReference type="ChEBI" id="CHEBI:59789"/>
    </ligand>
</feature>
<feature type="binding site" evidence="16">
    <location>
        <position position="2653"/>
    </location>
    <ligand>
        <name>S-adenosyl-L-methionine</name>
        <dbReference type="ChEBI" id="CHEBI:59789"/>
    </ligand>
</feature>
<feature type="binding site" evidence="16">
    <location>
        <position position="2726"/>
    </location>
    <ligand>
        <name>S-adenosyl-L-methionine</name>
        <dbReference type="ChEBI" id="CHEBI:59789"/>
    </ligand>
</feature>
<feature type="binding site" evidence="3">
    <location>
        <position position="2945"/>
    </location>
    <ligand>
        <name>Zn(2+)</name>
        <dbReference type="ChEBI" id="CHEBI:29105"/>
        <label>1</label>
    </ligand>
</feature>
<feature type="binding site" evidence="3">
    <location>
        <position position="2949"/>
    </location>
    <ligand>
        <name>Zn(2+)</name>
        <dbReference type="ChEBI" id="CHEBI:29105"/>
        <label>1</label>
    </ligand>
</feature>
<feature type="binding site" evidence="3">
    <location>
        <position position="2954"/>
    </location>
    <ligand>
        <name>Zn(2+)</name>
        <dbReference type="ChEBI" id="CHEBI:29105"/>
        <label>1</label>
    </ligand>
</feature>
<feature type="binding site" evidence="3">
    <location>
        <position position="2957"/>
    </location>
    <ligand>
        <name>Zn(2+)</name>
        <dbReference type="ChEBI" id="CHEBI:29105"/>
        <label>1</label>
    </ligand>
</feature>
<feature type="binding site" evidence="3">
    <location>
        <position position="3222"/>
    </location>
    <ligand>
        <name>Zn(2+)</name>
        <dbReference type="ChEBI" id="CHEBI:29105"/>
        <label>2</label>
    </ligand>
</feature>
<feature type="binding site" evidence="3">
    <location>
        <position position="3238"/>
    </location>
    <ligand>
        <name>Zn(2+)</name>
        <dbReference type="ChEBI" id="CHEBI:29105"/>
        <label>2</label>
    </ligand>
</feature>
<feature type="binding site" evidence="3">
    <location>
        <position position="3357"/>
    </location>
    <ligand>
        <name>Zn(2+)</name>
        <dbReference type="ChEBI" id="CHEBI:29105"/>
        <label>2</label>
    </ligand>
</feature>
<feature type="site" description="Cleavage; by viral protease NS3" evidence="39">
    <location>
        <begin position="101"/>
        <end position="102"/>
    </location>
</feature>
<feature type="site" description="Cleavage; by host signal peptidase" evidence="39">
    <location>
        <begin position="121"/>
        <end position="122"/>
    </location>
</feature>
<feature type="site" description="Cleavage; by host furin" evidence="7">
    <location>
        <begin position="210"/>
        <end position="211"/>
    </location>
</feature>
<feature type="site" description="Cleavage; by host signal peptidase" evidence="7">
    <location>
        <begin position="285"/>
        <end position="286"/>
    </location>
</feature>
<feature type="site" description="Cleavage; by host signal peptidase" evidence="37">
    <location>
        <begin position="778"/>
        <end position="779"/>
    </location>
</feature>
<feature type="site" description="Cleavage; by host" evidence="7">
    <location>
        <begin position="1130"/>
        <end position="1131"/>
    </location>
</feature>
<feature type="site" description="Cleavage; by viral protease NS3" evidence="42">
    <location>
        <begin position="1320"/>
        <end position="1321"/>
    </location>
</feature>
<feature type="site" description="Cleavage; by viral protease NS3" evidence="31 38">
    <location>
        <begin position="1354"/>
        <end position="1355"/>
    </location>
</feature>
<feature type="site" description="Cleavage; by autolysis" evidence="31 37">
    <location>
        <begin position="1484"/>
        <end position="1485"/>
    </location>
</feature>
<feature type="site" description="Involved in NS3 ATPase and RTPase activities" evidence="3">
    <location>
        <position position="1945"/>
    </location>
</feature>
<feature type="site" description="Involved in NS3 ATPase and RTPase activities" evidence="3">
    <location>
        <position position="1948"/>
    </location>
</feature>
<feature type="site" description="Cleavage; by autolysis" evidence="31 40 41">
    <location>
        <begin position="2107"/>
        <end position="2108"/>
    </location>
</feature>
<feature type="site" description="Cleavage; by viral protease NS3" evidence="41">
    <location>
        <begin position="2233"/>
        <end position="2234"/>
    </location>
</feature>
<feature type="site" description="Cleavage; by host signal peptidase" evidence="7">
    <location>
        <begin position="2256"/>
        <end position="2257"/>
    </location>
</feature>
<feature type="site" description="Cleavage; by viral protease NS3" evidence="37 40 41">
    <location>
        <begin position="2506"/>
        <end position="2507"/>
    </location>
</feature>
<feature type="site" description="mRNA cap binding" evidence="16 28">
    <location>
        <position position="2519"/>
    </location>
</feature>
<feature type="site" description="mRNA cap binding; via carbonyl oxygen" evidence="16 28">
    <location>
        <position position="2522"/>
    </location>
</feature>
<feature type="site" description="mRNA cap binding" evidence="16 28">
    <location>
        <position position="2523"/>
    </location>
</feature>
<feature type="site" description="mRNA cap binding; via carbonyl oxygen" evidence="16 28">
    <location>
        <position position="2525"/>
    </location>
</feature>
<feature type="site" description="mRNA cap binding" evidence="16">
    <location>
        <position position="2530"/>
    </location>
</feature>
<feature type="site" description="mRNA cap binding" evidence="16 28">
    <location>
        <position position="2534"/>
    </location>
</feature>
<feature type="site" description="Essential for 2'-O-methyltransferase activity" evidence="16">
    <location>
        <position position="2567"/>
    </location>
</feature>
<feature type="site" description="Essential for 2'-O-methyltransferase and N-7 methyltransferase activity" evidence="16 27">
    <location>
        <position position="2652"/>
    </location>
</feature>
<feature type="site" description="mRNA cap binding" evidence="16 28">
    <location>
        <position position="2656"/>
    </location>
</feature>
<feature type="site" description="Essential for 2'-O-methyltransferase activity" evidence="16">
    <location>
        <position position="2688"/>
    </location>
</feature>
<feature type="site" description="mRNA cap binding" evidence="16 28">
    <location>
        <position position="2719"/>
    </location>
</feature>
<feature type="site" description="mRNA cap binding" evidence="16 28">
    <location>
        <position position="2721"/>
    </location>
</feature>
<feature type="site" description="Essential for 2'-O-methyltransferase activity" evidence="16">
    <location>
        <position position="2724"/>
    </location>
</feature>
<feature type="modified residue" description="N6-acetyllysine; by host" evidence="8">
    <location>
        <position position="1877"/>
    </location>
</feature>
<feature type="modified residue" description="Phosphoserine" evidence="27">
    <location>
        <position position="2562"/>
    </location>
</feature>
<feature type="glycosylation site" description="N-linked (GlcNAc...) asparagine; by host" evidence="11">
    <location>
        <position position="134"/>
    </location>
</feature>
<feature type="glycosylation site" description="N-linked (GlcNAc...) asparagine; by host" evidence="11">
    <location>
        <position position="150"/>
    </location>
</feature>
<feature type="glycosylation site" description="N-linked (GlcNAc...) asparagine; by host" evidence="11">
    <location>
        <position position="908"/>
    </location>
</feature>
<feature type="glycosylation site" description="N-linked (GlcNAc...) asparagine; by host" evidence="11">
    <location>
        <position position="986"/>
    </location>
</feature>
<feature type="disulfide bond" evidence="6">
    <location>
        <begin position="288"/>
        <end position="315"/>
    </location>
</feature>
<feature type="disulfide bond" evidence="6">
    <location>
        <begin position="345"/>
        <end position="406"/>
    </location>
</feature>
<feature type="disulfide bond" evidence="2">
    <location>
        <begin position="345"/>
        <end position="401"/>
    </location>
</feature>
<feature type="disulfide bond" evidence="6">
    <location>
        <begin position="359"/>
        <end position="390"/>
    </location>
</feature>
<feature type="disulfide bond" evidence="2">
    <location>
        <begin position="377"/>
        <end position="406"/>
    </location>
</feature>
<feature type="disulfide bond" evidence="6">
    <location>
        <begin position="377"/>
        <end position="401"/>
    </location>
</feature>
<feature type="disulfide bond" evidence="6">
    <location>
        <begin position="467"/>
        <end position="568"/>
    </location>
</feature>
<feature type="disulfide bond" evidence="6">
    <location>
        <begin position="585"/>
        <end position="615"/>
    </location>
</feature>
<feature type="disulfide bond" evidence="6">
    <location>
        <begin position="782"/>
        <end position="793"/>
    </location>
</feature>
<feature type="disulfide bond" evidence="6">
    <location>
        <begin position="833"/>
        <end position="921"/>
    </location>
</feature>
<feature type="disulfide bond" evidence="6">
    <location>
        <begin position="957"/>
        <end position="1002"/>
    </location>
</feature>
<feature type="disulfide bond" evidence="6">
    <location>
        <begin position="1058"/>
        <end position="1107"/>
    </location>
</feature>
<feature type="disulfide bond" evidence="6">
    <location>
        <begin position="1069"/>
        <end position="1091"/>
    </location>
</feature>
<feature type="disulfide bond" evidence="6">
    <location>
        <begin position="1090"/>
        <end position="1094"/>
    </location>
</feature>
<feature type="sequence variant" description="In strain: Isolate Brazil/YF-VAVD/75 vaccine and Isolate 17DD vaccine.">
    <original>V</original>
    <variation>A</variation>
    <location>
        <position position="341"/>
    </location>
</feature>
<feature type="sequence variant" description="In strain: Isolate 17D-204-USA HONG1 vaccine, Isolate 17D-204-USA HONG2 vaccine and Isolate 17D-204-USA HONG3 vaccine.">
    <original>N</original>
    <variation>T</variation>
    <location>
        <position position="438"/>
    </location>
</feature>
<feature type="sequence variant" description="In strain: Isolate 17DD vaccine.">
    <original>D</original>
    <variation>S</variation>
    <location>
        <position position="440"/>
    </location>
</feature>
<feature type="sequence variant" description="In strain: Isolate Brazil/YF-VAVD/75 vaccine and Isolate 17DD vaccine.">
    <original>S</original>
    <variation>P</variation>
    <location>
        <position position="610"/>
    </location>
</feature>
<feature type="sequence variant" description="In strain: Isolate Brazil/YF-VAVD/75 vaccine.">
    <original>I</original>
    <variation>V</variation>
    <location>
        <position position="629"/>
    </location>
</feature>
<feature type="sequence variant" description="In strain: Isolate 17DD vaccine.">
    <original>T</original>
    <variation>V</variation>
    <location>
        <position position="701"/>
    </location>
</feature>
<feature type="sequence variant" description="In strain: Isolate 17D-204-South Africa vaccine large plaque variant.">
    <original>A</original>
    <variation>V</variation>
    <location>
        <position position="744"/>
    </location>
</feature>
<feature type="sequence variant" description="In strain: Isolate 17D-204-South Africa vaccine large plaque variant.">
    <original>L</original>
    <variation>M</variation>
    <location>
        <position position="764"/>
    </location>
</feature>
<feature type="sequence variant" description="In strain: Isolate Brazil/YF-VAVD/75 vaccine and Isolate 17DD vaccine.">
    <original>F</original>
    <variation>L</variation>
    <location>
        <position position="1299"/>
    </location>
</feature>
<feature type="sequence variant" description="In strain: Isolate 17DD vaccine.">
    <original>Q</original>
    <variation>R</variation>
    <location>
        <position position="1666"/>
    </location>
</feature>
<feature type="sequence variant" description="In strain: Isolate Brazil/YF-VAVD/75 vaccine.">
    <original>P</original>
    <variation>S</variation>
    <location>
        <position position="1669"/>
    </location>
</feature>
<feature type="sequence variant" description="In strain: Isolate Brazil/YF-VAVD/75 vaccine and Isolate 17DD vaccine.">
    <original>V</original>
    <variation>I</variation>
    <location>
        <position position="1679"/>
    </location>
</feature>
<feature type="sequence variant" description="In strain: Isolate 17D-204-USA HONG1 vaccine, Isolate 17D-204-USA HONG2 vaccine, Isolate 17D-204-USA HONG3 vaccine, Isolate Spain/AVD2791-93F/04 vaccine, Isolate Brazil/YF-VAVD/75 vaccine, Isolate 17DD vaccine and Isolate Pasteur 17D-204 vaccine.">
    <original>V</original>
    <variation>I</variation>
    <location>
        <position position="2214"/>
    </location>
</feature>
<feature type="sequence variant" description="In strain: Isolate Brazil/YF-VAVD/75 vaccine.">
    <original>P</original>
    <variation>S</variation>
    <location>
        <position position="2277"/>
    </location>
</feature>
<feature type="sequence variant" description="In strain: Isolate 17D-204-South Africa vaccine large plaque variant, Isolate 17D-204-South Africa vaccine medium plaque variant, Isolate 17D-204-South Africa vaccine, Isolate 17D-204-USA HONG1 vaccine, Isolate 17D-204-USA HONG2 vaccine, Isolate 17D-204-USA HONG3 vaccine, Isolate Brazil/YF-VAVD/75 vaccine, Isolate Spain/AVD2791-93F/04 vaccine, Isolate 17DD vaccine and Isolate Pasteur 17D-204 vaccine.">
    <original>E</original>
    <variation>K</variation>
    <location>
        <position position="2401"/>
    </location>
</feature>
<feature type="sequence variant" description="In strain: Isolate 17D-204-USA HONG vaccine1, Isolate 17D-204-USA HONG2 vaccine and Isolate 17D-204-USA HONG3 vaccine.">
    <original>L</original>
    <variation>S</variation>
    <location>
        <position position="2460"/>
    </location>
</feature>
<feature type="sequence variant" description="In strain: Isolate Brazil/YF-VAVD/75 vaccine and Isolate 17DD vaccine.">
    <original>R</original>
    <variation>Q</variation>
    <location>
        <position position="2528"/>
    </location>
</feature>
<feature type="sequence variant" description="In strain: Isolate 17D-204-South Africa vaccine medium plaque variant.">
    <original>P</original>
    <variation>S</variation>
    <location>
        <position position="2643"/>
    </location>
</feature>
<feature type="sequence variant" description="In strain: Isolate Brazil/YF-VAVD/75 vaccine.">
    <original>V</original>
    <variation>I</variation>
    <location>
        <position position="2661"/>
    </location>
</feature>
<feature type="sequence variant" description="In strain: Isolate Brazil/YF-VAVD/75 vaccine and Isolate 17DD vaccine.">
    <original>N</original>
    <variation>S</variation>
    <location>
        <position position="2897"/>
    </location>
</feature>
<feature type="sequence variant" description="In strain: Isolate 17D-204-USA HONG2 vaccine.">
    <original>G</original>
    <variation>R</variation>
    <location>
        <position position="3110"/>
    </location>
</feature>
<feature type="sequence variant" description="In strain: Isolate Brazil/YF-VAVD/75 vaccine.">
    <original>M</original>
    <variation>N</variation>
    <location>
        <position position="3135"/>
    </location>
</feature>
<feature type="sequence variant" description="In strain: Isolate 17D-204-South Africa vaccine large plaque variant, Isolate 17D-204-South Africa vaccine medium plaque variant, Isolate 17D-204-South Africa vaccine, Isolate 17D-204-USA HONG1 vaccine, Isolate 17D-204-USA HONG2 vaccine, Isolate 17D-204-USA HONG3 vaccine, Isolate Brazil/YF-VAVD/75 vaccine, Isolate Spain/AVD2791-93F/04 vaccine, Isolate 17DD vaccine and Isolate Pasteur 17D-204 vaccine.">
    <original>D</original>
    <variation>N</variation>
    <location>
        <position position="3163"/>
    </location>
</feature>
<feature type="sequence variant" description="In strain: Isolate Brazil/YF-VAVD/75 vaccine.">
    <original>H</original>
    <variation>R</variation>
    <location>
        <position position="3222"/>
    </location>
</feature>
<feature type="mutagenesis site" description="Complete loss of NS2B-NS3 cleavage.">
    <original>RKRR</original>
    <variation>AAAA</variation>
    <location>
        <begin position="98"/>
        <end position="101"/>
    </location>
</feature>
<feature type="mutagenesis site" description="Complete loss of NS2B-NS3 cleavage.">
    <original>RKRR</original>
    <variation>AKAA</variation>
    <location>
        <begin position="98"/>
        <end position="101"/>
    </location>
</feature>
<feature type="mutagenesis site" description="Reduces NS2B-NS3 cleavage efficiency.">
    <original>RKRR</original>
    <variation>AKRA</variation>
    <location>
        <begin position="98"/>
        <end position="101"/>
    </location>
</feature>
<feature type="mutagenesis site" description="Complete loss of NS2B-NS3 cleavage.">
    <original>RKR</original>
    <variation>AAA</variation>
    <location>
        <begin position="98"/>
        <end position="100"/>
    </location>
</feature>
<feature type="mutagenesis site" description="Complete loss of NS2B-NS3 cleavage.">
    <original>RKR</original>
    <variation>AKA</variation>
    <location>
        <begin position="98"/>
        <end position="100"/>
    </location>
</feature>
<feature type="mutagenesis site" description="Reduces NS2B-NS3 cleavage efficiency.">
    <original>RK</original>
    <variation>AA</variation>
    <location>
        <begin position="98"/>
        <end position="99"/>
    </location>
</feature>
<feature type="mutagenesis site" description="Complete loss of NS2B-NS3 cleavage." evidence="17">
    <original>KRR</original>
    <variation>ARA</variation>
    <location>
        <begin position="99"/>
        <end position="101"/>
    </location>
</feature>
<feature type="mutagenesis site" description="Complete loss of NS2B-NS3 cleavage.">
    <original>KR</original>
    <variation>AA</variation>
    <location>
        <begin position="99"/>
        <end position="100"/>
    </location>
</feature>
<feature type="mutagenesis site" description="Reduces NS2B-NS3 cleavage efficiency.">
    <original>RR</original>
    <variation>AA</variation>
    <location>
        <begin position="100"/>
        <end position="101"/>
    </location>
</feature>
<feature type="mutagenesis site" description="Complete loss of infectious virus production. Enhances signal peptidase cleavage in vitro of nascent capsid protein C." evidence="18">
    <original>LLMTGG</original>
    <variation>VPQAQA</variation>
    <location>
        <begin position="116"/>
        <end position="121"/>
    </location>
</feature>
<feature type="mutagenesis site" description="Reduces viral RNA accumulation and NS1 secretion." evidence="42">
    <original>N</original>
    <variation>A</variation>
    <location>
        <position position="908"/>
    </location>
</feature>
<feature type="mutagenesis site" description="Reduces viral RNA accumulation and NS1 secretion." evidence="42">
    <original>S</original>
    <variation>A</variation>
    <location>
        <position position="910"/>
    </location>
</feature>
<feature type="mutagenesis site" description="No effect." evidence="42">
    <original>N</original>
    <variation>A</variation>
    <location>
        <position position="986"/>
    </location>
</feature>
<feature type="mutagenesis site" description="No effect." evidence="42">
    <original>T</original>
    <variation>A</variation>
    <location>
        <position position="988"/>
    </location>
</feature>
<feature type="mutagenesis site" description="Blocks RNA replication." evidence="43">
    <original>R</original>
    <variation>A</variation>
    <location>
        <position position="1077"/>
    </location>
</feature>
<feature type="mutagenesis site" description="Defective in infectious particle production; almost no effect on viral replication." evidence="34">
    <original>RKR</original>
    <variation>AAA</variation>
    <location>
        <begin position="1152"/>
        <end position="1154"/>
    </location>
</feature>
<feature type="mutagenesis site" description="Defective in infectious particle production; almost no effect on viral replication." evidence="34">
    <original>RER</original>
    <variation>AAA</variation>
    <location>
        <begin position="1229"/>
        <end position="1231"/>
    </location>
</feature>
<feature type="mutagenesis site" description="Increases NS2A-alpha processing, complete loss of NS2A.">
    <original>QKT</original>
    <variation>RRS</variation>
    <location>
        <begin position="1319"/>
        <end position="1321"/>
    </location>
</feature>
<feature type="mutagenesis site" description="Almost no effect on viral replication." evidence="34">
    <original>Q</original>
    <variation>A</variation>
    <location>
        <position position="1319"/>
    </location>
</feature>
<feature type="mutagenesis site" description="Complete loss of cleavage and NS2A alpha. Complete loss of infectivity." evidence="20">
    <original>Q</original>
    <variation>S</variation>
    <location>
        <position position="1319"/>
    </location>
</feature>
<feature type="mutagenesis site" description="Complete loss of cleavage and NS2A-alpha processing. Complete loss of infectivity." evidence="20">
    <original>K</original>
    <variation>E</variation>
    <variation>I</variation>
    <variation>Q</variation>
    <variation>S</variation>
    <location>
        <position position="1320"/>
    </location>
</feature>
<feature type="mutagenesis site" description="No effect on NS2A-alpha processing." evidence="20">
    <original>K</original>
    <variation>R</variation>
    <location>
        <position position="1320"/>
    </location>
</feature>
<feature type="mutagenesis site" description="Complete loss of cleavage and NS2A alpha synthesis. Complete loss of infectivity." evidence="20">
    <original>T</original>
    <variation>V</variation>
    <location>
        <position position="1321"/>
    </location>
</feature>
<feature type="mutagenesis site" description="Enhances NS2A-NS2B cleavage efficiency." evidence="38">
    <original>F</original>
    <variation>C</variation>
    <variation>I</variation>
    <variation>V</variation>
    <location>
        <position position="1351"/>
    </location>
</feature>
<feature type="mutagenesis site" description="No effect on NS2A-NS2B cleavage efficiency." evidence="38">
    <original>F</original>
    <variation>G</variation>
    <location>
        <position position="1351"/>
    </location>
</feature>
<feature type="mutagenesis site" description="Enhances NS2A-NS2B cleavage efficiency." evidence="38">
    <original>G</original>
    <variation>A</variation>
    <variation>K</variation>
    <location>
        <position position="1352"/>
    </location>
</feature>
<feature type="mutagenesis site" description="Reduces NS2A-NS2B cleavage efficiency." evidence="38">
    <original>G</original>
    <variation>E</variation>
    <variation>V</variation>
    <location>
        <position position="1352"/>
    </location>
</feature>
<feature type="mutagenesis site" description="Reduces NS2A-NS2B cleavage efficiency." evidence="38">
    <original>R</original>
    <variation>H</variation>
    <variation>K</variation>
    <variation>R</variation>
    <variation>T</variation>
    <location>
        <position position="1353"/>
    </location>
</feature>
<feature type="mutagenesis site" description="Complete loss of NS2A-NS2B cleavage." evidence="38">
    <original>R</original>
    <variation>L</variation>
    <variation>P</variation>
    <location>
        <position position="1353"/>
    </location>
</feature>
<feature type="mutagenesis site" description="Complete loss of NS2A-NS2B cleavage." evidence="38">
    <original>R</original>
    <variation>I</variation>
    <variation>N</variation>
    <variation>S</variation>
    <variation>T</variation>
    <location>
        <position position="1354"/>
    </location>
</feature>
<feature type="mutagenesis site" description="Reduces of NS2A-NS2B cleavage efficiency." evidence="38">
    <original>R</original>
    <variation>K</variation>
    <location>
        <position position="1354"/>
    </location>
</feature>
<feature type="mutagenesis site" description="Complete loss of NS2A-NS2B cleavage." evidence="38">
    <original>S</original>
    <variation>D</variation>
    <variation>K</variation>
    <variation>R</variation>
    <variation>V</variation>
    <location>
        <position position="1355"/>
    </location>
</feature>
<feature type="mutagenesis site" description="Reduces of NS2A-NS2B cleavage efficiency." evidence="38">
    <original>S</original>
    <variation>G</variation>
    <location>
        <position position="1355"/>
    </location>
</feature>
<feature type="mutagenesis site" description="Complete loss of polyprotein cleavage." evidence="19">
    <original>ELKK</original>
    <variation>ALAA</variation>
    <location>
        <begin position="1406"/>
        <end position="1409"/>
    </location>
</feature>
<feature type="mutagenesis site" description="Complete loss NS3 protease activity." evidence="32">
    <original>H</original>
    <variation>A</variation>
    <location>
        <position position="1537"/>
    </location>
</feature>
<feature type="mutagenesis site" description="Complete loss NS3 protease activity." evidence="32">
    <original>D</original>
    <variation>A</variation>
    <variation>N</variation>
    <location>
        <position position="1561"/>
    </location>
</feature>
<feature type="mutagenesis site" description="Complete loss NS3 protease activity." evidence="32">
    <original>S</original>
    <variation>A</variation>
    <location>
        <position position="1622"/>
    </location>
</feature>
<feature type="mutagenesis site" description="Diminishes NS3 protease activity." evidence="32">
    <original>S</original>
    <variation>C</variation>
    <location>
        <position position="1622"/>
    </location>
</feature>
<feature type="mutagenesis site" description="Complete loss of production of infectious virus particles." evidence="25">
    <original>W</original>
    <variation>A</variation>
    <location>
        <position position="1833"/>
    </location>
</feature>
<feature type="mutagenesis site" description="Reduces NS4A-NS4B cleavage efficiency." evidence="40">
    <original>R</original>
    <variation>A</variation>
    <variation>L</variation>
    <variation>M</variation>
    <variation>T</variation>
    <variation>V</variation>
    <location>
        <position position="2107"/>
    </location>
</feature>
<feature type="mutagenesis site" description="Complete loss of NS4A-NS4B cleavage." evidence="40 41">
    <original>R</original>
    <variation>E</variation>
    <location>
        <position position="2107"/>
    </location>
</feature>
<feature type="mutagenesis site" description="No effect on NS4A-NS4B cleavage efficiency." evidence="40">
    <original>R</original>
    <variation>K</variation>
    <location>
        <position position="2107"/>
    </location>
</feature>
<feature type="mutagenesis site" description="Complete loss of NS4A-NS4B cleavage." evidence="40">
    <original>R</original>
    <variation>P</variation>
    <location>
        <position position="2107"/>
    </location>
</feature>
<feature type="mutagenesis site" description="No effect on NS4A-NS4B cleavage." evidence="41">
    <original>S</original>
    <variation>A</variation>
    <variation>T</variation>
    <location>
        <position position="2234"/>
    </location>
</feature>
<feature type="mutagenesis site" description="No effect on NS4A-NS4B cleavage." evidence="41">
    <original>S</original>
    <variation>I</variation>
    <variation>P</variation>
    <location>
        <position position="2234"/>
    </location>
</feature>
<feature type="mutagenesis site" description="No effect on NS4B-NS5 cleavage efficiency." evidence="40">
    <original>R</original>
    <variation>A</variation>
    <variation>I</variation>
    <variation>L</variation>
    <variation>Q</variation>
    <variation>S</variation>
    <variation>T</variation>
    <location>
        <position position="2505"/>
    </location>
</feature>
<feature type="mutagenesis site" description="Reduces NS4B-NS5 cleavage efficiency." evidence="40">
    <original>R</original>
    <variation>P</variation>
    <location>
        <position position="2505"/>
    </location>
</feature>
<feature type="mutagenesis site" description="Complete loss of NS4B-NS5 cleavage." evidence="40 41">
    <original>R</original>
    <variation>E</variation>
    <location>
        <position position="2506"/>
    </location>
</feature>
<feature type="mutagenesis site" description="Reduces NS4B-NS5 cleavage efficiency." evidence="40">
    <original>R</original>
    <variation>H</variation>
    <variation>N</variation>
    <variation>Q</variation>
    <location>
        <position position="2506"/>
    </location>
</feature>
<feature type="mutagenesis site" description="No effect on NS4B-NS5 cleavage efficiency." evidence="40">
    <original>R</original>
    <variation>K</variation>
    <location>
        <position position="2506"/>
    </location>
</feature>
<feature type="mutagenesis site" description="Complete loss of NS4B-NS5 cleavage." evidence="40">
    <original>R</original>
    <variation>Y</variation>
    <location>
        <position position="2506"/>
    </location>
</feature>
<feature type="mutagenesis site" description="Reduces NS4B-NS5 cleavage efficiency.">
    <original>G</original>
    <variation>A</variation>
    <variation>S</variation>
    <location>
        <position position="2507"/>
    </location>
</feature>
<feature type="mutagenesis site" description="Reduces NS4B-NS5 cleavage efficiency.">
    <original>G</original>
    <variation>E</variation>
    <variation>K</variation>
    <variation>L</variation>
    <variation>M</variation>
    <variation>N</variation>
    <variation>V</variation>
    <location>
        <position position="2507"/>
    </location>
</feature>
<feature type="mutagenesis site" description="Complete loss of NS5 binding to STAT2 after IFN-I stimulation." evidence="33">
    <original>K</original>
    <variation>R</variation>
    <location>
        <position position="2512"/>
    </location>
</feature>
<feature type="mutagenesis site" description="Complete loss of 2'-O-MTase activity." evidence="27">
    <original>S</original>
    <variation>A</variation>
    <location>
        <position position="2562"/>
    </location>
</feature>
<feature type="strand" evidence="58">
    <location>
        <begin position="123"/>
        <end position="127"/>
    </location>
</feature>
<feature type="strand" evidence="58">
    <location>
        <begin position="130"/>
        <end position="134"/>
    </location>
</feature>
<feature type="helix" evidence="58">
    <location>
        <begin position="137"/>
        <end position="139"/>
    </location>
</feature>
<feature type="strand" evidence="58">
    <location>
        <begin position="143"/>
        <end position="146"/>
    </location>
</feature>
<feature type="strand" evidence="58">
    <location>
        <begin position="149"/>
        <end position="153"/>
    </location>
</feature>
<feature type="strand" evidence="58">
    <location>
        <begin position="160"/>
        <end position="169"/>
    </location>
</feature>
<feature type="strand" evidence="58">
    <location>
        <begin position="183"/>
        <end position="188"/>
    </location>
</feature>
<feature type="strand" evidence="58">
    <location>
        <begin position="191"/>
        <end position="199"/>
    </location>
</feature>
<feature type="turn" evidence="60">
    <location>
        <begin position="288"/>
        <end position="290"/>
    </location>
</feature>
<feature type="strand" evidence="61">
    <location>
        <begin position="292"/>
        <end position="298"/>
    </location>
</feature>
<feature type="strand" evidence="61">
    <location>
        <begin position="305"/>
        <end position="311"/>
    </location>
</feature>
<feature type="strand" evidence="61">
    <location>
        <begin position="315"/>
        <end position="319"/>
    </location>
</feature>
<feature type="strand" evidence="61">
    <location>
        <begin position="326"/>
        <end position="335"/>
    </location>
</feature>
<feature type="strand" evidence="61">
    <location>
        <begin position="340"/>
        <end position="357"/>
    </location>
</feature>
<feature type="strand" evidence="61">
    <location>
        <begin position="370"/>
        <end position="385"/>
    </location>
</feature>
<feature type="helix" evidence="61">
    <location>
        <begin position="386"/>
        <end position="388"/>
    </location>
</feature>
<feature type="strand" evidence="61">
    <location>
        <begin position="394"/>
        <end position="414"/>
    </location>
</feature>
<feature type="helix" evidence="61">
    <location>
        <begin position="417"/>
        <end position="419"/>
    </location>
</feature>
<feature type="strand" evidence="61">
    <location>
        <begin position="421"/>
        <end position="428"/>
    </location>
</feature>
<feature type="helix" evidence="61">
    <location>
        <begin position="434"/>
        <end position="439"/>
    </location>
</feature>
<feature type="strand" evidence="61">
    <location>
        <begin position="442"/>
        <end position="446"/>
    </location>
</feature>
<feature type="strand" evidence="61">
    <location>
        <begin position="453"/>
        <end position="456"/>
    </location>
</feature>
<feature type="strand" evidence="61">
    <location>
        <begin position="460"/>
        <end position="465"/>
    </location>
</feature>
<feature type="strand" evidence="61">
    <location>
        <begin position="468"/>
        <end position="470"/>
    </location>
</feature>
<feature type="turn" evidence="61">
    <location>
        <begin position="473"/>
        <end position="475"/>
    </location>
</feature>
<feature type="strand" evidence="61">
    <location>
        <begin position="479"/>
        <end position="483"/>
    </location>
</feature>
<feature type="strand" evidence="61">
    <location>
        <begin position="486"/>
        <end position="490"/>
    </location>
</feature>
<feature type="helix" evidence="61">
    <location>
        <begin position="492"/>
        <end position="496"/>
    </location>
</feature>
<feature type="strand" evidence="61">
    <location>
        <begin position="505"/>
        <end position="507"/>
    </location>
</feature>
<feature type="helix" evidence="61">
    <location>
        <begin position="513"/>
        <end position="516"/>
    </location>
</feature>
<feature type="strand" evidence="61">
    <location>
        <begin position="517"/>
        <end position="519"/>
    </location>
</feature>
<feature type="strand" evidence="61">
    <location>
        <begin position="529"/>
        <end position="531"/>
    </location>
</feature>
<feature type="helix" evidence="61">
    <location>
        <begin position="536"/>
        <end position="542"/>
    </location>
</feature>
<feature type="turn" evidence="61">
    <location>
        <begin position="543"/>
        <end position="545"/>
    </location>
</feature>
<feature type="strand" evidence="61">
    <location>
        <begin position="548"/>
        <end position="551"/>
    </location>
</feature>
<feature type="strand" evidence="61">
    <location>
        <begin position="559"/>
        <end position="562"/>
    </location>
</feature>
<feature type="strand" evidence="61">
    <location>
        <begin position="565"/>
        <end position="571"/>
    </location>
</feature>
<feature type="strand" evidence="61">
    <location>
        <begin position="582"/>
        <end position="584"/>
    </location>
</feature>
<feature type="strand" evidence="61">
    <location>
        <begin position="589"/>
        <end position="597"/>
    </location>
</feature>
<feature type="strand" evidence="61">
    <location>
        <begin position="599"/>
        <end position="601"/>
    </location>
</feature>
<feature type="strand" evidence="61">
    <location>
        <begin position="603"/>
        <end position="611"/>
    </location>
</feature>
<feature type="strand" evidence="61">
    <location>
        <begin position="613"/>
        <end position="616"/>
    </location>
</feature>
<feature type="strand" evidence="61">
    <location>
        <begin position="619"/>
        <end position="626"/>
    </location>
</feature>
<feature type="strand" evidence="61">
    <location>
        <begin position="633"/>
        <end position="636"/>
    </location>
</feature>
<feature type="strand" evidence="59">
    <location>
        <begin position="640"/>
        <end position="643"/>
    </location>
</feature>
<feature type="strand" evidence="61">
    <location>
        <begin position="646"/>
        <end position="653"/>
    </location>
</feature>
<feature type="strand" evidence="61">
    <location>
        <begin position="656"/>
        <end position="666"/>
    </location>
</feature>
<feature type="strand" evidence="61">
    <location>
        <begin position="670"/>
        <end position="676"/>
    </location>
</feature>
<feature type="strand" evidence="63">
    <location>
        <begin position="782"/>
        <end position="785"/>
    </location>
</feature>
<feature type="turn" evidence="63">
    <location>
        <begin position="786"/>
        <end position="789"/>
    </location>
</feature>
<feature type="strand" evidence="63">
    <location>
        <begin position="790"/>
        <end position="793"/>
    </location>
</feature>
<feature type="strand" evidence="63">
    <location>
        <begin position="796"/>
        <end position="800"/>
    </location>
</feature>
<feature type="helix" evidence="63">
    <location>
        <begin position="801"/>
        <end position="804"/>
    </location>
</feature>
<feature type="helix" evidence="63">
    <location>
        <begin position="819"/>
        <end position="829"/>
    </location>
</feature>
<feature type="helix" evidence="63">
    <location>
        <begin position="840"/>
        <end position="859"/>
    </location>
</feature>
<feature type="strand" evidence="63">
    <location>
        <begin position="863"/>
        <end position="867"/>
    </location>
</feature>
<feature type="strand" evidence="63">
    <location>
        <begin position="909"/>
        <end position="914"/>
    </location>
</feature>
<feature type="strand" evidence="63">
    <location>
        <begin position="919"/>
        <end position="921"/>
    </location>
</feature>
<feature type="helix" evidence="63">
    <location>
        <begin position="923"/>
        <end position="925"/>
    </location>
</feature>
<feature type="strand" evidence="63">
    <location>
        <begin position="931"/>
        <end position="933"/>
    </location>
</feature>
<feature type="strand" evidence="63">
    <location>
        <begin position="946"/>
        <end position="949"/>
    </location>
</feature>
<feature type="helix" evidence="63">
    <location>
        <begin position="959"/>
        <end position="961"/>
    </location>
</feature>
<feature type="strand" evidence="63">
    <location>
        <begin position="963"/>
        <end position="967"/>
    </location>
</feature>
<feature type="strand" evidence="63">
    <location>
        <begin position="970"/>
        <end position="975"/>
    </location>
</feature>
<feature type="strand" evidence="63">
    <location>
        <begin position="978"/>
        <end position="984"/>
    </location>
</feature>
<feature type="strand" evidence="63">
    <location>
        <begin position="986"/>
        <end position="996"/>
    </location>
</feature>
<feature type="strand" evidence="63">
    <location>
        <begin position="1048"/>
        <end position="1056"/>
    </location>
</feature>
<feature type="strand" evidence="63">
    <location>
        <begin position="1063"/>
        <end position="1065"/>
    </location>
</feature>
<feature type="strand" evidence="63">
    <location>
        <begin position="1067"/>
        <end position="1069"/>
    </location>
</feature>
<feature type="strand" evidence="63">
    <location>
        <begin position="1077"/>
        <end position="1079"/>
    </location>
</feature>
<feature type="strand" evidence="63">
    <location>
        <begin position="1089"/>
        <end position="1093"/>
    </location>
</feature>
<feature type="strand" evidence="63">
    <location>
        <begin position="1099"/>
        <end position="1102"/>
    </location>
</feature>
<feature type="strand" evidence="63">
    <location>
        <begin position="1104"/>
        <end position="1108"/>
    </location>
</feature>
<feature type="strand" evidence="54">
    <location>
        <begin position="1677"/>
        <end position="1680"/>
    </location>
</feature>
<feature type="turn" evidence="54">
    <location>
        <begin position="1688"/>
        <end position="1691"/>
    </location>
</feature>
<feature type="helix" evidence="54">
    <location>
        <begin position="1692"/>
        <end position="1702"/>
    </location>
</feature>
<feature type="strand" evidence="54">
    <location>
        <begin position="1707"/>
        <end position="1713"/>
    </location>
</feature>
<feature type="helix" evidence="54">
    <location>
        <begin position="1714"/>
        <end position="1723"/>
    </location>
</feature>
<feature type="turn" evidence="54">
    <location>
        <begin position="1724"/>
        <end position="1726"/>
    </location>
</feature>
<feature type="strand" evidence="54">
    <location>
        <begin position="1729"/>
        <end position="1731"/>
    </location>
</feature>
<feature type="strand" evidence="54">
    <location>
        <begin position="1746"/>
        <end position="1750"/>
    </location>
</feature>
<feature type="helix" evidence="54">
    <location>
        <begin position="1751"/>
        <end position="1758"/>
    </location>
</feature>
<feature type="strand" evidence="54">
    <location>
        <begin position="1760"/>
        <end position="1762"/>
    </location>
</feature>
<feature type="strand" evidence="54">
    <location>
        <begin position="1768"/>
        <end position="1772"/>
    </location>
</feature>
<feature type="turn" evidence="54">
    <location>
        <begin position="1773"/>
        <end position="1776"/>
    </location>
</feature>
<feature type="helix" evidence="54">
    <location>
        <begin position="1780"/>
        <end position="1794"/>
    </location>
</feature>
<feature type="strand" evidence="54">
    <location>
        <begin position="1799"/>
        <end position="1803"/>
    </location>
</feature>
<feature type="strand" evidence="54">
    <location>
        <begin position="1821"/>
        <end position="1825"/>
    </location>
</feature>
<feature type="strand" evidence="54">
    <location>
        <begin position="1834"/>
        <end position="1836"/>
    </location>
</feature>
<feature type="helix" evidence="54">
    <location>
        <begin position="1839"/>
        <end position="1842"/>
    </location>
</feature>
<feature type="strand" evidence="54">
    <location>
        <begin position="1847"/>
        <end position="1850"/>
    </location>
</feature>
<feature type="helix" evidence="54">
    <location>
        <begin position="1854"/>
        <end position="1866"/>
    </location>
</feature>
<feature type="strand" evidence="54">
    <location>
        <begin position="1871"/>
        <end position="1873"/>
    </location>
</feature>
<feature type="strand" evidence="54">
    <location>
        <begin position="1876"/>
        <end position="1878"/>
    </location>
</feature>
<feature type="strand" evidence="54">
    <location>
        <begin position="1892"/>
        <end position="1899"/>
    </location>
</feature>
<feature type="strand" evidence="54">
    <location>
        <begin position="1909"/>
        <end position="1913"/>
    </location>
</feature>
<feature type="strand" evidence="54">
    <location>
        <begin position="1916"/>
        <end position="1923"/>
    </location>
</feature>
<feature type="turn" evidence="54">
    <location>
        <begin position="1924"/>
        <end position="1927"/>
    </location>
</feature>
<feature type="strand" evidence="54">
    <location>
        <begin position="1928"/>
        <end position="1936"/>
    </location>
</feature>
<feature type="helix" evidence="54">
    <location>
        <begin position="1939"/>
        <end position="1946"/>
    </location>
</feature>
<feature type="strand" evidence="54">
    <location>
        <begin position="1958"/>
        <end position="1962"/>
    </location>
</feature>
<feature type="helix" evidence="54">
    <location>
        <begin position="1974"/>
        <end position="1983"/>
    </location>
</feature>
<feature type="helix" evidence="54">
    <location>
        <begin position="1989"/>
        <end position="1991"/>
    </location>
</feature>
<feature type="helix" evidence="54">
    <location>
        <begin position="2000"/>
        <end position="2003"/>
    </location>
</feature>
<feature type="strand" evidence="54">
    <location>
        <begin position="2004"/>
        <end position="2006"/>
    </location>
</feature>
<feature type="turn" evidence="54">
    <location>
        <begin position="2008"/>
        <end position="2011"/>
    </location>
</feature>
<feature type="helix" evidence="54">
    <location>
        <begin position="2015"/>
        <end position="2026"/>
    </location>
</feature>
<feature type="helix" evidence="54">
    <location>
        <begin position="2032"/>
        <end position="2040"/>
    </location>
</feature>
<feature type="helix" evidence="54">
    <location>
        <begin position="2049"/>
        <end position="2051"/>
    </location>
</feature>
<feature type="helix" evidence="54">
    <location>
        <begin position="2056"/>
        <end position="2058"/>
    </location>
</feature>
<feature type="strand" evidence="57">
    <location>
        <begin position="2063"/>
        <end position="2065"/>
    </location>
</feature>
<feature type="strand" evidence="54">
    <location>
        <begin position="2069"/>
        <end position="2071"/>
    </location>
</feature>
<feature type="strand" evidence="54">
    <location>
        <begin position="2077"/>
        <end position="2079"/>
    </location>
</feature>
<feature type="strand" evidence="54">
    <location>
        <begin position="2083"/>
        <end position="2086"/>
    </location>
</feature>
<feature type="helix" evidence="54">
    <location>
        <begin position="2087"/>
        <end position="2089"/>
    </location>
</feature>
<feature type="strand" evidence="54">
    <location>
        <begin position="2090"/>
        <end position="2092"/>
    </location>
</feature>
<feature type="helix" evidence="54">
    <location>
        <begin position="2093"/>
        <end position="2103"/>
    </location>
</feature>
<feature type="turn" evidence="54">
    <location>
        <begin position="2104"/>
        <end position="2106"/>
    </location>
</feature>
<feature type="helix" evidence="56">
    <location>
        <begin position="2514"/>
        <end position="2524"/>
    </location>
</feature>
<feature type="helix" evidence="56">
    <location>
        <begin position="2527"/>
        <end position="2534"/>
    </location>
</feature>
<feature type="strand" evidence="56">
    <location>
        <begin position="2536"/>
        <end position="2541"/>
    </location>
</feature>
<feature type="helix" evidence="56">
    <location>
        <begin position="2544"/>
        <end position="2551"/>
    </location>
</feature>
<feature type="strand" evidence="62">
    <location>
        <begin position="2561"/>
        <end position="2563"/>
    </location>
</feature>
<feature type="helix" evidence="56">
    <location>
        <begin position="2564"/>
        <end position="2573"/>
    </location>
</feature>
<feature type="strand" evidence="56">
    <location>
        <begin position="2581"/>
        <end position="2586"/>
    </location>
</feature>
<feature type="helix" evidence="56">
    <location>
        <begin position="2592"/>
        <end position="2598"/>
    </location>
</feature>
<feature type="strand" evidence="56">
    <location>
        <begin position="2603"/>
        <end position="2609"/>
    </location>
</feature>
<feature type="helix" evidence="56">
    <location>
        <begin position="2627"/>
        <end position="2629"/>
    </location>
</feature>
<feature type="strand" evidence="56">
    <location>
        <begin position="2630"/>
        <end position="2633"/>
    </location>
</feature>
<feature type="turn" evidence="56">
    <location>
        <begin position="2638"/>
        <end position="2640"/>
    </location>
</feature>
<feature type="strand" evidence="56">
    <location>
        <begin position="2647"/>
        <end position="2651"/>
    </location>
</feature>
<feature type="helix" evidence="56">
    <location>
        <begin position="2660"/>
        <end position="2678"/>
    </location>
</feature>
<feature type="turn" evidence="55">
    <location>
        <begin position="2679"/>
        <end position="2681"/>
    </location>
</feature>
<feature type="strand" evidence="56">
    <location>
        <begin position="2683"/>
        <end position="2690"/>
    </location>
</feature>
<feature type="helix" evidence="56">
    <location>
        <begin position="2695"/>
        <end position="2708"/>
    </location>
</feature>
<feature type="strand" evidence="56">
    <location>
        <begin position="2711"/>
        <end position="2713"/>
    </location>
</feature>
<feature type="strand" evidence="56">
    <location>
        <begin position="2725"/>
        <end position="2730"/>
    </location>
</feature>
<feature type="helix" evidence="56">
    <location>
        <begin position="2735"/>
        <end position="2751"/>
    </location>
</feature>
<feature type="strand" evidence="56">
    <location>
        <begin position="2757"/>
        <end position="2760"/>
    </location>
</feature>
<feature type="helix" evidence="62">
    <location>
        <begin position="2781"/>
        <end position="2794"/>
    </location>
</feature>
<feature type="turn" evidence="62">
    <location>
        <begin position="2795"/>
        <end position="2798"/>
    </location>
</feature>
<feature type="strand" evidence="62">
    <location>
        <begin position="2808"/>
        <end position="2819"/>
    </location>
</feature>
<feature type="helix" evidence="62">
    <location>
        <begin position="2830"/>
        <end position="2835"/>
    </location>
</feature>
<feature type="helix" evidence="62">
    <location>
        <begin position="2837"/>
        <end position="2839"/>
    </location>
</feature>
<feature type="helix" evidence="62">
    <location>
        <begin position="2843"/>
        <end position="2846"/>
    </location>
</feature>
<feature type="strand" evidence="62">
    <location>
        <begin position="2848"/>
        <end position="2850"/>
    </location>
</feature>
<feature type="helix" evidence="62">
    <location>
        <begin position="2855"/>
        <end position="2865"/>
    </location>
</feature>
<feature type="helix" evidence="62">
    <location>
        <begin position="2875"/>
        <end position="2892"/>
    </location>
</feature>
<feature type="turn" evidence="62">
    <location>
        <begin position="2893"/>
        <end position="2895"/>
    </location>
</feature>
<feature type="helix" evidence="62">
    <location>
        <begin position="2903"/>
        <end position="2909"/>
    </location>
</feature>
<feature type="helix" evidence="62">
    <location>
        <begin position="2929"/>
        <end position="2932"/>
    </location>
</feature>
<feature type="helix" evidence="62">
    <location>
        <begin position="2936"/>
        <end position="2950"/>
    </location>
</feature>
<feature type="strand" evidence="62">
    <location>
        <begin position="2959"/>
        <end position="2963"/>
    </location>
</feature>
<feature type="strand" evidence="62">
    <location>
        <begin position="2967"/>
        <end position="2969"/>
    </location>
</feature>
<feature type="strand" evidence="62">
    <location>
        <begin position="2980"/>
        <end position="2983"/>
    </location>
</feature>
<feature type="helix" evidence="62">
    <location>
        <begin position="2986"/>
        <end position="2996"/>
    </location>
</feature>
<feature type="helix" evidence="62">
    <location>
        <begin position="2998"/>
        <end position="3001"/>
    </location>
</feature>
<feature type="turn" evidence="62">
    <location>
        <begin position="3002"/>
        <end position="3005"/>
    </location>
</feature>
<feature type="helix" evidence="62">
    <location>
        <begin position="3007"/>
        <end position="3010"/>
    </location>
</feature>
<feature type="strand" evidence="62">
    <location>
        <begin position="3011"/>
        <end position="3013"/>
    </location>
</feature>
<feature type="helix" evidence="62">
    <location>
        <begin position="3019"/>
        <end position="3031"/>
    </location>
</feature>
<feature type="helix" evidence="62">
    <location>
        <begin position="3045"/>
        <end position="3048"/>
    </location>
</feature>
<feature type="helix" evidence="62">
    <location>
        <begin position="3051"/>
        <end position="3057"/>
    </location>
</feature>
<feature type="helix" evidence="62">
    <location>
        <begin position="3058"/>
        <end position="3063"/>
    </location>
</feature>
<feature type="helix" evidence="62">
    <location>
        <begin position="3066"/>
        <end position="3078"/>
    </location>
</feature>
<feature type="turn" evidence="62">
    <location>
        <begin position="3079"/>
        <end position="3081"/>
    </location>
</feature>
<feature type="strand" evidence="62">
    <location>
        <begin position="3085"/>
        <end position="3090"/>
    </location>
</feature>
<feature type="strand" evidence="62">
    <location>
        <begin position="3095"/>
        <end position="3102"/>
    </location>
</feature>
<feature type="helix" evidence="62">
    <location>
        <begin position="3113"/>
        <end position="3133"/>
    </location>
</feature>
<feature type="helix" evidence="62">
    <location>
        <begin position="3139"/>
        <end position="3141"/>
    </location>
</feature>
<feature type="helix" evidence="62">
    <location>
        <begin position="3147"/>
        <end position="3166"/>
    </location>
</feature>
<feature type="strand" evidence="62">
    <location>
        <begin position="3168"/>
        <end position="3171"/>
    </location>
</feature>
<feature type="strand" evidence="62">
    <location>
        <begin position="3174"/>
        <end position="3177"/>
    </location>
</feature>
<feature type="helix" evidence="62">
    <location>
        <begin position="3182"/>
        <end position="3186"/>
    </location>
</feature>
<feature type="helix" evidence="62">
    <location>
        <begin position="3189"/>
        <end position="3193"/>
    </location>
</feature>
<feature type="strand" evidence="62">
    <location>
        <begin position="3210"/>
        <end position="3212"/>
    </location>
</feature>
<feature type="helix" evidence="62">
    <location>
        <begin position="3213"/>
        <end position="3215"/>
    </location>
</feature>
<feature type="strand" evidence="62">
    <location>
        <begin position="3221"/>
        <end position="3227"/>
    </location>
</feature>
<feature type="strand" evidence="62">
    <location>
        <begin position="3233"/>
        <end position="3238"/>
    </location>
</feature>
<feature type="helix" evidence="62">
    <location>
        <begin position="3241"/>
        <end position="3248"/>
    </location>
</feature>
<feature type="strand" evidence="62">
    <location>
        <begin position="3253"/>
        <end position="3255"/>
    </location>
</feature>
<feature type="helix" evidence="62">
    <location>
        <begin position="3258"/>
        <end position="3275"/>
    </location>
</feature>
<feature type="helix" evidence="62">
    <location>
        <begin position="3280"/>
        <end position="3292"/>
    </location>
</feature>
<feature type="strand" evidence="62">
    <location>
        <begin position="3314"/>
        <end position="3317"/>
    </location>
</feature>
<feature type="helix" evidence="62">
    <location>
        <begin position="3319"/>
        <end position="3327"/>
    </location>
</feature>
<feature type="helix" evidence="62">
    <location>
        <begin position="3343"/>
        <end position="3345"/>
    </location>
</feature>
<feature type="helix" evidence="62">
    <location>
        <begin position="3351"/>
        <end position="3356"/>
    </location>
</feature>
<feature type="helix" evidence="62">
    <location>
        <begin position="3364"/>
        <end position="3384"/>
    </location>
</feature>
<feature type="helix" evidence="62">
    <location>
        <begin position="3392"/>
        <end position="3395"/>
    </location>
</feature>
<feature type="helix" evidence="62">
    <location>
        <begin position="3397"/>
        <end position="3399"/>
    </location>
</feature>
<dbReference type="EC" id="3.4.21.91" evidence="31"/>
<dbReference type="EC" id="3.6.1.15" evidence="24"/>
<dbReference type="EC" id="3.6.4.13" evidence="24"/>
<dbReference type="EC" id="2.1.1.56" evidence="16"/>
<dbReference type="EC" id="2.1.1.57" evidence="16"/>
<dbReference type="EC" id="2.7.7.48" evidence="12"/>
<dbReference type="EMBL" id="X03700">
    <property type="protein sequence ID" value="CAA27332.1"/>
    <property type="molecule type" value="Genomic_RNA"/>
</dbReference>
<dbReference type="EMBL" id="X15062">
    <property type="protein sequence ID" value="CAB37419.1"/>
    <property type="molecule type" value="Genomic_RNA"/>
</dbReference>
<dbReference type="EMBL" id="U17066">
    <property type="protein sequence ID" value="AAC54267.1"/>
    <property type="molecule type" value="Genomic_RNA"/>
</dbReference>
<dbReference type="EMBL" id="U17067">
    <property type="protein sequence ID" value="AAC54268.1"/>
    <property type="molecule type" value="Genomic_RNA"/>
</dbReference>
<dbReference type="EMBL" id="AF052437">
    <property type="protein sequence ID" value="AAC35899.1"/>
    <property type="molecule type" value="Genomic_RNA"/>
</dbReference>
<dbReference type="EMBL" id="AF052438">
    <property type="protein sequence ID" value="AAC35900.1"/>
    <property type="molecule type" value="Genomic_RNA"/>
</dbReference>
<dbReference type="EMBL" id="AF052439">
    <property type="protein sequence ID" value="AAC35901.1"/>
    <property type="molecule type" value="Genomic_RNA"/>
</dbReference>
<dbReference type="EMBL" id="AF052444">
    <property type="protein sequence ID" value="AAC35906.1"/>
    <property type="molecule type" value="Genomic_RNA"/>
</dbReference>
<dbReference type="EMBL" id="AF052445">
    <property type="protein sequence ID" value="AAC35907.1"/>
    <property type="molecule type" value="Genomic_RNA"/>
</dbReference>
<dbReference type="EMBL" id="AF052446">
    <property type="protein sequence ID" value="AAC35908.1"/>
    <property type="molecule type" value="Genomic_RNA"/>
</dbReference>
<dbReference type="EMBL" id="DQ118157">
    <property type="protein sequence ID" value="AAZ31436.1"/>
    <property type="molecule type" value="Genomic_RNA"/>
</dbReference>
<dbReference type="EMBL" id="DQ100292">
    <property type="protein sequence ID" value="AAZ07885.1"/>
    <property type="molecule type" value="Genomic_RNA"/>
</dbReference>
<dbReference type="PIR" id="A03914">
    <property type="entry name" value="GNWVY"/>
</dbReference>
<dbReference type="PIR" id="S07757">
    <property type="entry name" value="GNWVYP"/>
</dbReference>
<dbReference type="RefSeq" id="NP_041726.1">
    <property type="nucleotide sequence ID" value="NC_002031.1"/>
</dbReference>
<dbReference type="PDB" id="1NA4">
    <property type="method" value="EM"/>
</dbReference>
<dbReference type="PDB" id="1YKS">
    <property type="method" value="X-ray"/>
    <property type="resolution" value="1.80 A"/>
    <property type="chains" value="A=1671-2107"/>
</dbReference>
<dbReference type="PDB" id="3EVA">
    <property type="method" value="X-ray"/>
    <property type="resolution" value="1.50 A"/>
    <property type="chains" value="A=2507-2772"/>
</dbReference>
<dbReference type="PDB" id="3EVB">
    <property type="method" value="X-ray"/>
    <property type="resolution" value="1.85 A"/>
    <property type="chains" value="A=2507-2772"/>
</dbReference>
<dbReference type="PDB" id="3EVC">
    <property type="method" value="X-ray"/>
    <property type="resolution" value="1.60 A"/>
    <property type="chains" value="A=2507-2772"/>
</dbReference>
<dbReference type="PDB" id="3EVD">
    <property type="method" value="X-ray"/>
    <property type="resolution" value="1.50 A"/>
    <property type="chains" value="A=2507-2772"/>
</dbReference>
<dbReference type="PDB" id="3EVE">
    <property type="method" value="X-ray"/>
    <property type="resolution" value="1.70 A"/>
    <property type="chains" value="A=2507-2772"/>
</dbReference>
<dbReference type="PDB" id="3EVF">
    <property type="method" value="X-ray"/>
    <property type="resolution" value="1.45 A"/>
    <property type="chains" value="A=2507-2772"/>
</dbReference>
<dbReference type="PDB" id="5FFM">
    <property type="method" value="X-ray"/>
    <property type="resolution" value="2.60 A"/>
    <property type="chains" value="A=1671-2107"/>
</dbReference>
<dbReference type="PDB" id="5N6B">
    <property type="method" value="X-ray"/>
    <property type="resolution" value="1.71 A"/>
    <property type="chains" value="C/F=2470-2478"/>
</dbReference>
<dbReference type="PDB" id="6EPK">
    <property type="method" value="X-ray"/>
    <property type="resolution" value="2.70 A"/>
    <property type="chains" value="B/E=122-210"/>
</dbReference>
<dbReference type="PDB" id="6IW0">
    <property type="method" value="X-ray"/>
    <property type="resolution" value="3.60 A"/>
    <property type="chains" value="A=286-680"/>
</dbReference>
<dbReference type="PDB" id="6IW1">
    <property type="method" value="X-ray"/>
    <property type="resolution" value="3.10 A"/>
    <property type="chains" value="A/B/C=286-680"/>
</dbReference>
<dbReference type="PDB" id="6IW2">
    <property type="method" value="X-ray"/>
    <property type="resolution" value="2.90 A"/>
    <property type="chains" value="A/D/G/J/M/P=286-680"/>
</dbReference>
<dbReference type="PDB" id="6IW4">
    <property type="method" value="X-ray"/>
    <property type="resolution" value="2.80 A"/>
    <property type="chains" value="A/B=286-680"/>
</dbReference>
<dbReference type="PDB" id="6QSN">
    <property type="method" value="X-ray"/>
    <property type="resolution" value="3.00 A"/>
    <property type="chains" value="A/B=2507-3411"/>
</dbReference>
<dbReference type="PDB" id="6SS7">
    <property type="method" value="X-ray"/>
    <property type="resolution" value="2.50 A"/>
    <property type="chains" value="C/F=2470-2478"/>
</dbReference>
<dbReference type="PDB" id="6SS8">
    <property type="method" value="X-ray"/>
    <property type="resolution" value="2.24 A"/>
    <property type="chains" value="C/F=2470-2478"/>
</dbReference>
<dbReference type="PDB" id="6SS9">
    <property type="method" value="X-ray"/>
    <property type="resolution" value="2.70 A"/>
    <property type="chains" value="C/F=2470-2478"/>
</dbReference>
<dbReference type="PDB" id="6SSA">
    <property type="method" value="X-ray"/>
    <property type="resolution" value="2.11 A"/>
    <property type="chains" value="C/F/I/L=2470-2478"/>
</dbReference>
<dbReference type="PDB" id="8ZB9">
    <property type="method" value="EM"/>
    <property type="resolution" value="3.31 A"/>
    <property type="chains" value="A/a=779-1130"/>
</dbReference>
<dbReference type="PDB" id="8ZBA">
    <property type="method" value="EM"/>
    <property type="resolution" value="3.57 A"/>
    <property type="chains" value="A/B/a/b=779-1130"/>
</dbReference>
<dbReference type="PDBsum" id="1NA4"/>
<dbReference type="PDBsum" id="1YKS"/>
<dbReference type="PDBsum" id="3EVA"/>
<dbReference type="PDBsum" id="3EVB"/>
<dbReference type="PDBsum" id="3EVC"/>
<dbReference type="PDBsum" id="3EVD"/>
<dbReference type="PDBsum" id="3EVE"/>
<dbReference type="PDBsum" id="3EVF"/>
<dbReference type="PDBsum" id="5FFM"/>
<dbReference type="PDBsum" id="5N6B"/>
<dbReference type="PDBsum" id="6EPK"/>
<dbReference type="PDBsum" id="6IW0"/>
<dbReference type="PDBsum" id="6IW1"/>
<dbReference type="PDBsum" id="6IW2"/>
<dbReference type="PDBsum" id="6IW4"/>
<dbReference type="PDBsum" id="6QSN"/>
<dbReference type="PDBsum" id="6SS7"/>
<dbReference type="PDBsum" id="6SS8"/>
<dbReference type="PDBsum" id="6SS9"/>
<dbReference type="PDBsum" id="6SSA"/>
<dbReference type="PDBsum" id="8ZB9"/>
<dbReference type="PDBsum" id="8ZBA"/>
<dbReference type="BMRB" id="P03314"/>
<dbReference type="EMDB" id="EMD-39898"/>
<dbReference type="EMDB" id="EMD-39899"/>
<dbReference type="SMR" id="P03314"/>
<dbReference type="ChEMBL" id="CHEMBL4523585"/>
<dbReference type="MEROPS" id="S07.001"/>
<dbReference type="iPTMnet" id="P03314"/>
<dbReference type="ABCD" id="P03314">
    <property type="antibodies" value="7 sequenced antibodies"/>
</dbReference>
<dbReference type="GeneID" id="1502173"/>
<dbReference type="KEGG" id="vg:1502173"/>
<dbReference type="BRENDA" id="2.7.7.50">
    <property type="organism ID" value="6740"/>
</dbReference>
<dbReference type="BRENDA" id="3.4.21.91">
    <property type="organism ID" value="6740"/>
</dbReference>
<dbReference type="BRENDA" id="3.6.4.13">
    <property type="organism ID" value="6740"/>
</dbReference>
<dbReference type="EvolutionaryTrace" id="P03314"/>
<dbReference type="Proteomes" id="UP000000360">
    <property type="component" value="Segment"/>
</dbReference>
<dbReference type="Proteomes" id="UP000119912">
    <property type="component" value="Genome"/>
</dbReference>
<dbReference type="Proteomes" id="UP000138083">
    <property type="component" value="Genome"/>
</dbReference>
<dbReference type="Proteomes" id="UP000141075">
    <property type="component" value="Genome"/>
</dbReference>
<dbReference type="Proteomes" id="UP000158765">
    <property type="component" value="Genome"/>
</dbReference>
<dbReference type="Proteomes" id="UP000158778">
    <property type="component" value="Genome"/>
</dbReference>
<dbReference type="Proteomes" id="UP000180827">
    <property type="component" value="Genome"/>
</dbReference>
<dbReference type="Proteomes" id="UP000180883">
    <property type="component" value="Genome"/>
</dbReference>
<dbReference type="Proteomes" id="UP000180940">
    <property type="component" value="Genome"/>
</dbReference>
<dbReference type="Proteomes" id="UP000181442">
    <property type="component" value="Genome"/>
</dbReference>
<dbReference type="GO" id="GO:0005576">
    <property type="term" value="C:extracellular region"/>
    <property type="evidence" value="ECO:0007669"/>
    <property type="project" value="UniProtKB-SubCell"/>
</dbReference>
<dbReference type="GO" id="GO:0044167">
    <property type="term" value="C:host cell endoplasmic reticulum membrane"/>
    <property type="evidence" value="ECO:0007669"/>
    <property type="project" value="UniProtKB-SubCell"/>
</dbReference>
<dbReference type="GO" id="GO:0042025">
    <property type="term" value="C:host cell nucleus"/>
    <property type="evidence" value="ECO:0007669"/>
    <property type="project" value="UniProtKB-SubCell"/>
</dbReference>
<dbReference type="GO" id="GO:0044220">
    <property type="term" value="C:host cell perinuclear region of cytoplasm"/>
    <property type="evidence" value="ECO:0007669"/>
    <property type="project" value="UniProtKB-SubCell"/>
</dbReference>
<dbReference type="GO" id="GO:0016020">
    <property type="term" value="C:membrane"/>
    <property type="evidence" value="ECO:0007669"/>
    <property type="project" value="UniProtKB-KW"/>
</dbReference>
<dbReference type="GO" id="GO:0019028">
    <property type="term" value="C:viral capsid"/>
    <property type="evidence" value="ECO:0007669"/>
    <property type="project" value="UniProtKB-KW"/>
</dbReference>
<dbReference type="GO" id="GO:0019031">
    <property type="term" value="C:viral envelope"/>
    <property type="evidence" value="ECO:0000315"/>
    <property type="project" value="CACAO"/>
</dbReference>
<dbReference type="GO" id="GO:0055036">
    <property type="term" value="C:virion membrane"/>
    <property type="evidence" value="ECO:0007669"/>
    <property type="project" value="UniProtKB-SubCell"/>
</dbReference>
<dbReference type="GO" id="GO:0005524">
    <property type="term" value="F:ATP binding"/>
    <property type="evidence" value="ECO:0007669"/>
    <property type="project" value="UniProtKB-KW"/>
</dbReference>
<dbReference type="GO" id="GO:0016887">
    <property type="term" value="F:ATP hydrolysis activity"/>
    <property type="evidence" value="ECO:0007669"/>
    <property type="project" value="RHEA"/>
</dbReference>
<dbReference type="GO" id="GO:0003725">
    <property type="term" value="F:double-stranded RNA binding"/>
    <property type="evidence" value="ECO:0007669"/>
    <property type="project" value="InterPro"/>
</dbReference>
<dbReference type="GO" id="GO:0005525">
    <property type="term" value="F:GTP binding"/>
    <property type="evidence" value="ECO:0007669"/>
    <property type="project" value="UniProtKB-KW"/>
</dbReference>
<dbReference type="GO" id="GO:0046872">
    <property type="term" value="F:metal ion binding"/>
    <property type="evidence" value="ECO:0007669"/>
    <property type="project" value="UniProtKB-KW"/>
</dbReference>
<dbReference type="GO" id="GO:0004483">
    <property type="term" value="F:mRNA (nucleoside-2'-O-)-methyltransferase activity"/>
    <property type="evidence" value="ECO:0007669"/>
    <property type="project" value="UniProtKB-EC"/>
</dbReference>
<dbReference type="GO" id="GO:0004482">
    <property type="term" value="F:mRNA 5'-cap (guanine-N7-)-methyltransferase activity"/>
    <property type="evidence" value="ECO:0007669"/>
    <property type="project" value="UniProtKB-EC"/>
</dbReference>
<dbReference type="GO" id="GO:0046983">
    <property type="term" value="F:protein dimerization activity"/>
    <property type="evidence" value="ECO:0007669"/>
    <property type="project" value="InterPro"/>
</dbReference>
<dbReference type="GO" id="GO:0003724">
    <property type="term" value="F:RNA helicase activity"/>
    <property type="evidence" value="ECO:0007669"/>
    <property type="project" value="UniProtKB-EC"/>
</dbReference>
<dbReference type="GO" id="GO:0003968">
    <property type="term" value="F:RNA-directed RNA polymerase activity"/>
    <property type="evidence" value="ECO:0007669"/>
    <property type="project" value="UniProtKB-KW"/>
</dbReference>
<dbReference type="GO" id="GO:0004252">
    <property type="term" value="F:serine-type endopeptidase activity"/>
    <property type="evidence" value="ECO:0007669"/>
    <property type="project" value="InterPro"/>
</dbReference>
<dbReference type="GO" id="GO:0005198">
    <property type="term" value="F:structural molecule activity"/>
    <property type="evidence" value="ECO:0007669"/>
    <property type="project" value="InterPro"/>
</dbReference>
<dbReference type="GO" id="GO:0075512">
    <property type="term" value="P:clathrin-dependent endocytosis of virus by host cell"/>
    <property type="evidence" value="ECO:0007669"/>
    <property type="project" value="UniProtKB-KW"/>
</dbReference>
<dbReference type="GO" id="GO:0039654">
    <property type="term" value="P:fusion of virus membrane with host endosome membrane"/>
    <property type="evidence" value="ECO:0007669"/>
    <property type="project" value="UniProtKB-KW"/>
</dbReference>
<dbReference type="GO" id="GO:0006508">
    <property type="term" value="P:proteolysis"/>
    <property type="evidence" value="ECO:0007669"/>
    <property type="project" value="UniProtKB-KW"/>
</dbReference>
<dbReference type="GO" id="GO:0039520">
    <property type="term" value="P:symbiont-mediated activation of host autophagy"/>
    <property type="evidence" value="ECO:0007669"/>
    <property type="project" value="UniProtKB-KW"/>
</dbReference>
<dbReference type="GO" id="GO:0052170">
    <property type="term" value="P:symbiont-mediated suppression of host innate immune response"/>
    <property type="evidence" value="ECO:0007669"/>
    <property type="project" value="UniProtKB-KW"/>
</dbReference>
<dbReference type="GO" id="GO:0039564">
    <property type="term" value="P:symbiont-mediated suppression of host JAK-STAT cascade via inhibition of STAT2 activity"/>
    <property type="evidence" value="ECO:0007669"/>
    <property type="project" value="UniProtKB-KW"/>
</dbReference>
<dbReference type="GO" id="GO:0039502">
    <property type="term" value="P:symbiont-mediated suppression of host type I interferon-mediated signaling pathway"/>
    <property type="evidence" value="ECO:0007669"/>
    <property type="project" value="UniProtKB-KW"/>
</dbReference>
<dbReference type="GO" id="GO:0039694">
    <property type="term" value="P:viral RNA genome replication"/>
    <property type="evidence" value="ECO:0007669"/>
    <property type="project" value="InterPro"/>
</dbReference>
<dbReference type="GO" id="GO:0019062">
    <property type="term" value="P:virion attachment to host cell"/>
    <property type="evidence" value="ECO:0007669"/>
    <property type="project" value="UniProtKB-KW"/>
</dbReference>
<dbReference type="CDD" id="cd20761">
    <property type="entry name" value="capping_2-OMTase_Flaviviridae"/>
    <property type="match status" value="1"/>
</dbReference>
<dbReference type="CDD" id="cd17931">
    <property type="entry name" value="DEXHc_viral_Ns3"/>
    <property type="match status" value="1"/>
</dbReference>
<dbReference type="CDD" id="cd12149">
    <property type="entry name" value="Flavi_E_C"/>
    <property type="match status" value="1"/>
</dbReference>
<dbReference type="CDD" id="cd17038">
    <property type="entry name" value="Flavi_M"/>
    <property type="match status" value="1"/>
</dbReference>
<dbReference type="CDD" id="cd23204">
    <property type="entry name" value="Flavivirus_RdRp"/>
    <property type="match status" value="1"/>
</dbReference>
<dbReference type="FunFam" id="1.20.1280.260:FF:000001">
    <property type="entry name" value="Envelope glycoprotein"/>
    <property type="match status" value="1"/>
</dbReference>
<dbReference type="FunFam" id="1.10.260.90:FF:000001">
    <property type="entry name" value="Genome polyprotein"/>
    <property type="match status" value="1"/>
</dbReference>
<dbReference type="FunFam" id="2.40.10.120:FF:000006">
    <property type="entry name" value="Genome polyprotein"/>
    <property type="match status" value="1"/>
</dbReference>
<dbReference type="FunFam" id="2.60.260.50:FF:000001">
    <property type="entry name" value="Genome polyprotein"/>
    <property type="match status" value="1"/>
</dbReference>
<dbReference type="FunFam" id="3.30.70.2840:FF:000001">
    <property type="entry name" value="Genome polyprotein"/>
    <property type="match status" value="1"/>
</dbReference>
<dbReference type="FunFam" id="3.30.70.2840:FF:000002">
    <property type="entry name" value="Genome polyprotein"/>
    <property type="match status" value="1"/>
</dbReference>
<dbReference type="FunFam" id="3.40.50.150:FF:000105">
    <property type="entry name" value="Genome polyprotein"/>
    <property type="match status" value="1"/>
</dbReference>
<dbReference type="FunFam" id="3.40.50.300:FF:000763">
    <property type="entry name" value="Genome polyprotein"/>
    <property type="match status" value="1"/>
</dbReference>
<dbReference type="Gene3D" id="1.10.10.930">
    <property type="match status" value="1"/>
</dbReference>
<dbReference type="Gene3D" id="1.10.260.90">
    <property type="match status" value="1"/>
</dbReference>
<dbReference type="Gene3D" id="1.20.1280.260">
    <property type="match status" value="1"/>
</dbReference>
<dbReference type="Gene3D" id="2.40.10.120">
    <property type="match status" value="2"/>
</dbReference>
<dbReference type="Gene3D" id="2.60.40.350">
    <property type="match status" value="1"/>
</dbReference>
<dbReference type="Gene3D" id="1.10.8.970">
    <property type="entry name" value="Flavivirus envelope glycoprotein M-like"/>
    <property type="match status" value="1"/>
</dbReference>
<dbReference type="Gene3D" id="2.60.260.50">
    <property type="entry name" value="Flavivirus polyprotein propeptide domain"/>
    <property type="match status" value="1"/>
</dbReference>
<dbReference type="Gene3D" id="3.30.70.2840">
    <property type="entry name" value="Flavivirus RNA-directed RNA polymerase, thumb domain"/>
    <property type="match status" value="3"/>
</dbReference>
<dbReference type="Gene3D" id="3.40.50.300">
    <property type="entry name" value="P-loop containing nucleotide triphosphate hydrolases"/>
    <property type="match status" value="2"/>
</dbReference>
<dbReference type="Gene3D" id="2.60.98.10">
    <property type="entry name" value="Tick-borne Encephalitis virus Glycoprotein, domain 1"/>
    <property type="match status" value="1"/>
</dbReference>
<dbReference type="Gene3D" id="3.40.50.150">
    <property type="entry name" value="Vaccinia Virus protein VP39"/>
    <property type="match status" value="1"/>
</dbReference>
<dbReference type="Gene3D" id="3.30.67.10">
    <property type="entry name" value="Viral Envelope Glycoprotein, domain 2"/>
    <property type="match status" value="1"/>
</dbReference>
<dbReference type="Gene3D" id="3.30.387.10">
    <property type="entry name" value="Viral Envelope Glycoprotein, domain 3"/>
    <property type="match status" value="1"/>
</dbReference>
<dbReference type="InterPro" id="IPR043502">
    <property type="entry name" value="DNA/RNA_pol_sf"/>
</dbReference>
<dbReference type="InterPro" id="IPR000069">
    <property type="entry name" value="Env_glycoprot_M_flavivir"/>
</dbReference>
<dbReference type="InterPro" id="IPR038302">
    <property type="entry name" value="Env_glycoprot_M_sf_flavivir"/>
</dbReference>
<dbReference type="InterPro" id="IPR013755">
    <property type="entry name" value="Flav_gly_cen_dom_subdom1"/>
</dbReference>
<dbReference type="InterPro" id="IPR001122">
    <property type="entry name" value="Flavi_capsidC"/>
</dbReference>
<dbReference type="InterPro" id="IPR037172">
    <property type="entry name" value="Flavi_capsidC_sf"/>
</dbReference>
<dbReference type="InterPro" id="IPR011492">
    <property type="entry name" value="Flavi_DEAD"/>
</dbReference>
<dbReference type="InterPro" id="IPR027287">
    <property type="entry name" value="Flavi_E_Ig-like"/>
</dbReference>
<dbReference type="InterPro" id="IPR026470">
    <property type="entry name" value="Flavi_E_Stem/Anchor_dom"/>
</dbReference>
<dbReference type="InterPro" id="IPR038345">
    <property type="entry name" value="Flavi_E_Stem/Anchor_dom_sf"/>
</dbReference>
<dbReference type="InterPro" id="IPR011998">
    <property type="entry name" value="Flavi_Glycoprot_E_cen/dimer"/>
</dbReference>
<dbReference type="InterPro" id="IPR001157">
    <property type="entry name" value="Flavi_NS1"/>
</dbReference>
<dbReference type="InterPro" id="IPR000752">
    <property type="entry name" value="Flavi_NS2A"/>
</dbReference>
<dbReference type="InterPro" id="IPR000487">
    <property type="entry name" value="Flavi_NS2B"/>
</dbReference>
<dbReference type="InterPro" id="IPR001850">
    <property type="entry name" value="Flavi_NS3_S7"/>
</dbReference>
<dbReference type="InterPro" id="IPR000404">
    <property type="entry name" value="Flavi_NS4A"/>
</dbReference>
<dbReference type="InterPro" id="IPR001528">
    <property type="entry name" value="Flavi_NS4B"/>
</dbReference>
<dbReference type="InterPro" id="IPR046811">
    <property type="entry name" value="Flavi_NS5_thumb"/>
</dbReference>
<dbReference type="InterPro" id="IPR002535">
    <property type="entry name" value="Flavi_propep"/>
</dbReference>
<dbReference type="InterPro" id="IPR038688">
    <property type="entry name" value="Flavi_propep_sf"/>
</dbReference>
<dbReference type="InterPro" id="IPR047530">
    <property type="entry name" value="Flavi_RdRp"/>
</dbReference>
<dbReference type="InterPro" id="IPR000208">
    <property type="entry name" value="Flavi_RdRp_fingers/palm"/>
</dbReference>
<dbReference type="InterPro" id="IPR000336">
    <property type="entry name" value="Flavivir/Alphavir_Ig-like_sf"/>
</dbReference>
<dbReference type="InterPro" id="IPR014412">
    <property type="entry name" value="Gen_Poly_FLV"/>
</dbReference>
<dbReference type="InterPro" id="IPR036253">
    <property type="entry name" value="Glycoprot_cen/dimer_sf"/>
</dbReference>
<dbReference type="InterPro" id="IPR038055">
    <property type="entry name" value="Glycoprot_E_dimer_dom"/>
</dbReference>
<dbReference type="InterPro" id="IPR013756">
    <property type="entry name" value="GlyE_cen_dom_subdom2"/>
</dbReference>
<dbReference type="InterPro" id="IPR014001">
    <property type="entry name" value="Helicase_ATP-bd"/>
</dbReference>
<dbReference type="InterPro" id="IPR001650">
    <property type="entry name" value="Helicase_C-like"/>
</dbReference>
<dbReference type="InterPro" id="IPR014756">
    <property type="entry name" value="Ig_E-set"/>
</dbReference>
<dbReference type="InterPro" id="IPR026490">
    <property type="entry name" value="mRNA_cap_0/1_MeTrfase"/>
</dbReference>
<dbReference type="InterPro" id="IPR049486">
    <property type="entry name" value="NS3-hel_C_flaviviridae"/>
</dbReference>
<dbReference type="InterPro" id="IPR027417">
    <property type="entry name" value="P-loop_NTPase"/>
</dbReference>
<dbReference type="InterPro" id="IPR009003">
    <property type="entry name" value="Peptidase_S1_PA"/>
</dbReference>
<dbReference type="InterPro" id="IPR007094">
    <property type="entry name" value="RNA-dir_pol_PSvirus"/>
</dbReference>
<dbReference type="InterPro" id="IPR002877">
    <property type="entry name" value="RNA_MeTrfase_FtsJ_dom"/>
</dbReference>
<dbReference type="InterPro" id="IPR029063">
    <property type="entry name" value="SAM-dependent_MTases_sf"/>
</dbReference>
<dbReference type="NCBIfam" id="TIGR04240">
    <property type="entry name" value="flavi_E_stem"/>
    <property type="match status" value="1"/>
</dbReference>
<dbReference type="Pfam" id="PF20907">
    <property type="entry name" value="Flav_NS3-hel_C"/>
    <property type="match status" value="1"/>
</dbReference>
<dbReference type="Pfam" id="PF01003">
    <property type="entry name" value="Flavi_capsid"/>
    <property type="match status" value="1"/>
</dbReference>
<dbReference type="Pfam" id="PF07652">
    <property type="entry name" value="Flavi_DEAD"/>
    <property type="match status" value="1"/>
</dbReference>
<dbReference type="Pfam" id="PF21659">
    <property type="entry name" value="Flavi_E_stem"/>
    <property type="match status" value="1"/>
</dbReference>
<dbReference type="Pfam" id="PF02832">
    <property type="entry name" value="Flavi_glycop_C"/>
    <property type="match status" value="1"/>
</dbReference>
<dbReference type="Pfam" id="PF00869">
    <property type="entry name" value="Flavi_glycoprot"/>
    <property type="match status" value="1"/>
</dbReference>
<dbReference type="Pfam" id="PF01004">
    <property type="entry name" value="Flavi_M"/>
    <property type="match status" value="1"/>
</dbReference>
<dbReference type="Pfam" id="PF00948">
    <property type="entry name" value="Flavi_NS1"/>
    <property type="match status" value="1"/>
</dbReference>
<dbReference type="Pfam" id="PF01005">
    <property type="entry name" value="Flavi_NS2A"/>
    <property type="match status" value="1"/>
</dbReference>
<dbReference type="Pfam" id="PF01002">
    <property type="entry name" value="Flavi_NS2B"/>
    <property type="match status" value="1"/>
</dbReference>
<dbReference type="Pfam" id="PF01350">
    <property type="entry name" value="Flavi_NS4A"/>
    <property type="match status" value="1"/>
</dbReference>
<dbReference type="Pfam" id="PF01349">
    <property type="entry name" value="Flavi_NS4B"/>
    <property type="match status" value="1"/>
</dbReference>
<dbReference type="Pfam" id="PF00972">
    <property type="entry name" value="Flavi_NS5"/>
    <property type="match status" value="1"/>
</dbReference>
<dbReference type="Pfam" id="PF20483">
    <property type="entry name" value="Flavi_NS5_thumb"/>
    <property type="match status" value="1"/>
</dbReference>
<dbReference type="Pfam" id="PF01570">
    <property type="entry name" value="Flavi_propep"/>
    <property type="match status" value="1"/>
</dbReference>
<dbReference type="Pfam" id="PF01728">
    <property type="entry name" value="FtsJ"/>
    <property type="match status" value="1"/>
</dbReference>
<dbReference type="Pfam" id="PF00949">
    <property type="entry name" value="Peptidase_S7"/>
    <property type="match status" value="1"/>
</dbReference>
<dbReference type="PIRSF" id="PIRSF003817">
    <property type="entry name" value="Gen_Poly_FLV"/>
    <property type="match status" value="1"/>
</dbReference>
<dbReference type="SMART" id="SM00487">
    <property type="entry name" value="DEXDc"/>
    <property type="match status" value="1"/>
</dbReference>
<dbReference type="SMART" id="SM00490">
    <property type="entry name" value="HELICc"/>
    <property type="match status" value="1"/>
</dbReference>
<dbReference type="SUPFAM" id="SSF56672">
    <property type="entry name" value="DNA/RNA polymerases"/>
    <property type="match status" value="1"/>
</dbReference>
<dbReference type="SUPFAM" id="SSF81296">
    <property type="entry name" value="E set domains"/>
    <property type="match status" value="1"/>
</dbReference>
<dbReference type="SUPFAM" id="SSF52540">
    <property type="entry name" value="P-loop containing nucleoside triphosphate hydrolases"/>
    <property type="match status" value="2"/>
</dbReference>
<dbReference type="SUPFAM" id="SSF53335">
    <property type="entry name" value="S-adenosyl-L-methionine-dependent methyltransferases"/>
    <property type="match status" value="1"/>
</dbReference>
<dbReference type="SUPFAM" id="SSF50494">
    <property type="entry name" value="Trypsin-like serine proteases"/>
    <property type="match status" value="1"/>
</dbReference>
<dbReference type="SUPFAM" id="SSF56983">
    <property type="entry name" value="Viral glycoprotein, central and dimerisation domains"/>
    <property type="match status" value="1"/>
</dbReference>
<dbReference type="PROSITE" id="PS51527">
    <property type="entry name" value="FLAVIVIRUS_NS2B"/>
    <property type="match status" value="1"/>
</dbReference>
<dbReference type="PROSITE" id="PS51528">
    <property type="entry name" value="FLAVIVIRUS_NS3PRO"/>
    <property type="match status" value="1"/>
</dbReference>
<dbReference type="PROSITE" id="PS51192">
    <property type="entry name" value="HELICASE_ATP_BIND_1"/>
    <property type="match status" value="1"/>
</dbReference>
<dbReference type="PROSITE" id="PS51194">
    <property type="entry name" value="HELICASE_CTER"/>
    <property type="match status" value="1"/>
</dbReference>
<dbReference type="PROSITE" id="PS50507">
    <property type="entry name" value="RDRP_SSRNA_POS"/>
    <property type="match status" value="1"/>
</dbReference>
<dbReference type="PROSITE" id="PS51591">
    <property type="entry name" value="RNA_CAP01_NS5_MT"/>
    <property type="match status" value="1"/>
</dbReference>
<sequence length="3411" mass="379518">MSGRKAQGKTLGVNMVRRGVRSLSNKIKQKTKQIGNRPGPSRGVQGFIFFFLFNILTGKKITAHLKRLWKMLDPRQGLAVLRKVKRVVASLMRGLSSRKRRSHDVLTVQFLILGMLLMTGGVTLVRKNRWLLLNVTSEDLGKTFSVGTGNCTTNILEAKYWCPDSMEYNCPNLSPREEPDDIDCWCYGVENVRVAYGKCDSAGRSRRSRRAIDLPTHENHGLKTRQEKWMTGRMGERQLQKIERWFVRNPFFAVTALTIAYLVGSNMTQRVVIALLVLAVGPAYSAHCIGITDRDFIEGVHGGTWVSATLEQDKCVTVMAPDKPSLDISLETVAIDRPAEVRKVCYNAVLTHVKINDKCPSTGEAHLAEENEGDNACKRTYSDRGWGNGCGLFGKGSIVACAKFTCAKSMSLFEVDQTKIQYVIRAQLHVGAKQENWNTDIKTLKFDALSGSQEVEFIGYGKATLECQVQTAVDFGNSYIAEMETESWIVDRQWAQDLTLPWQSGSGGVWREMHHLVEFEPPHAATIRVLALGNQEGSLKTALTGAMRVTKDTNDNNLYKLHGGHVSCRVKLSALTLKGTSYKICTDKMFFVKNPTDTGHGTVVMQVKVSKGAPCRIPVIVADDLTAAINKGILVTVNPIASTNDDEVLIEVNPPFGDSYIIVGRGDSRLTYQWHKEGSSIGKLFTQTMKGVERLAVMGDTAWDFSSAGGFFTSVGKGIHTVFGSAFQGLFGGLNWITKVIMGAVLIWVGINTRNMTMSMSMILVGVIMMFLSLGVGADQGCAINFGKRELKCGDGIFIFRDSDDWLNKYSYYPEDPVKLASIVKASFEEGKCGLNSVDSLEHEMWRSRADEINAIFEENEVDISVVVQDPKNVYQRGTHPFSRIRDGLQYGWKTWGKNLVFSPGRKNGSFIIDGKSRKECPFSNRVWNSFQIEEFGTGVFTTRVYMDAVFEYTIDCDGSILGAAVNGKKSAHGSPTFWMGSHEVNGTWMIHTLEALDYKECEWPLTHTIGTSVEESEMFMPRSIGGPVSSHNHIPGYKVQTNGPWMQVPLEVKREACPGTSVIIDGNCDGRGKSTRSTTDSGKVIPEWCCRSCTMPPVSFHGSDGCWYPMEIRPRKTHESHLVRSWVTAGEIHAVPFGLVSMMIAMEVVLRKRQGPKQMLVGGVVLLGAMLVGQVTLLDLLKLTVAVGLHFHEMNNGGDAMYMALIAAFSIRPGLLIGFGLRTLWSPRERLVLTLGAAMVEIALGGVMGGLWKYLNAVSLCILTINAVASRKASNTILPLMALLTPVTMAEVRLAAMFFCAVVIIGVLHQNFKDTSMQKTIPLVALTLTSYLGLTQPFLGLCAFLATRIFGRRSIPVNEALAAAGLVGVLAGLAFQEMENFLGPIAVGGLLMMLVSVAGRVDGLELKKLGEVSWEEEAEISGSSARYDVALSEQGEFKLLSEEKVPWDQVVMTSLALVGAALHPFALLLVLAGWLFHVRGARRSGDVLWDIPTPKIIEECEHLEDGIYGIFQSTFLGASQRGVGVAQGGVFHTMWHVTRGAFLVRNGKKLIPSWASVKEDLVAYGGSWKLEGRWDGEEEVQLIAAVPGKNVVNVQTKPSLFKVRNGGEIGAVALDYPSGTSGSPIVNRNGEVIGLYGNGILVGDNSFVSAISQTEVKEEGKEELQEIPTMLKKGMTTVLDFHPGAGKTRRFLPQILAECARRRLRTLVLAPTRVVLSEMKEAFHGLDVKFHTQAFSAHGSGREVIDAMCHATLTYRMLEPTRVVNWEVIIMDEAHFLDPASIAARGWAAHRARANESATILMTATPPGTSDEFPHSNGEIEDVQTDIPSEPWNTGHDWILADKRPTAWFLPSIRAANVMAASLRKAGKSVVVLNRKTFEREYPTIKQKKPDFILATDIAEMGANLCVERVLDCRTAFKPVLVDEGRKVAIKGPLRISASSAAQRRGRIGRNPNRDGDSYYYSEPTSENNAHHVCWLEASMLLDNMEVRGGMVAPLYGVEGTKTPVSPGEMRLRDDQRKVFRELVRNCDLPVWLSWQVAKAGLKTNDRKWCFEGPEEHEILNDSGETVKCRAPGGAKKPLRPRWCDERVSSDQSALSEFIKFAEGRRGAAEVLVVLSELPDFLAKKGGEAMDTISVFLHSEEGSRAYRNALSMMPEAMTIVMLFILAGLLTSGMVIFFMSPKGISRMSMAMGTMAGCGYLMFLGGVKPTHISYVMLIFFVLMVVVIPEPGQQRSIQDNQVAYLIIGILTLVSAVAANELGMLEKTKEDLFGKKNLIPSSASPWSWPDLDLKPGAAWTVYVGIVTMLSPMLHHWIKVEYGNLSLSGIAQSASVLSFMDKGIPFMKMNISVIMLLVSGWNSITVMPLLCGIGCAMLHWSLILPGIKAQQSKLAQRRVFHGVAENPVVDGNPTVDIEEAPEMPALYEKKLALYLLLALSLASVAMCRTPFSLAEGIVLASAALGPLIEGNTSLLWNGPMAVSMTGVMRGNHYAFVGVMYNLWKMKTGRRGSANGKTLGEVWKRELNLLDKRQFELYKRTDIVEVDRDTARRHLAEGKVDTGVAVSRGTAKLRWFHERGYVKLEGRVIDLGCGRGGWCYYAAAQKEVSGVKGFTLGRDGHEKPMNVQSLGWNIITFKDKTDIHRLEPVKCDTLLCDIGESSSSSVTEGERTVRVLDTVEKWLACGVDNFCVKVLAPYMPDVLEKLELLQRRFGGTVIRNPLSRNSTHEMYYVSGARSNVTFTVNQTSRLLMRRMRRPTGKVTLEADVILPIGTRSVETDKGPLDKEAIEERVERIKSEYMTSWFYDNDNPYRTWHYCGSYVTKTSGSAASMVNGVIKILTYPWDRIEEVTRMAMTDTTPFGQQRVFKEKVDTRAKDPPAGTRKIMKVVNRWLFRHLAREKNPRLCTKEEFIAKVRSHAAIGAYLEEQEQWKTANEAVQDPKFWELVDEERKLHQQGRCRTCVYNMMGKREKKLSEFGKAKGSRAIWYMWLGARYLEFEALGFLNEDHWASRENSGGGVEGIGLQYLGYVIRDLAAMDGGGFYADDTAGWDTRITEADLDDEQEILNYMSPHHKKLAQAVMEMTYKNKVVKVLRPAPGGKAYMDVISRRDQRGSGQVVTYALNTITNLKVQLIRMAEAEMVIHHQHVQDCDESVLTRLEAWLTEHGCDRLKRMAVSGDDCVVRPIDDRFGLALSHLNAMSKVRKDISEWQPSKGWNDWENVPFCSHHFHELQLKDGRRIVVPCREQDELIGRGRVSPGNGWMIKETACLSKAYANMWSLMYFHKRDMRLLSLAVSSAVPTSWVPQGRTTWSIHGKGEWMTTEDMLEVWNRVWITNNPHMQDKTMVKKWRDVPYLTKRQDKLCGSLIGMTNRATWASHIHLVIHRIRTLIGQEKYTDYLTVMDRYSVDADLQLGELI</sequence>